<evidence type="ECO:0000250" key="1"/>
<evidence type="ECO:0000250" key="2">
    <source>
        <dbReference type="UniProtKB" id="O92972"/>
    </source>
</evidence>
<evidence type="ECO:0000250" key="3">
    <source>
        <dbReference type="UniProtKB" id="P26663"/>
    </source>
</evidence>
<evidence type="ECO:0000250" key="4">
    <source>
        <dbReference type="UniProtKB" id="P26664"/>
    </source>
</evidence>
<evidence type="ECO:0000250" key="5">
    <source>
        <dbReference type="UniProtKB" id="P27958"/>
    </source>
</evidence>
<evidence type="ECO:0000250" key="6">
    <source>
        <dbReference type="UniProtKB" id="P29846"/>
    </source>
</evidence>
<evidence type="ECO:0000250" key="7">
    <source>
        <dbReference type="UniProtKB" id="Q01403"/>
    </source>
</evidence>
<evidence type="ECO:0000250" key="8">
    <source>
        <dbReference type="UniProtKB" id="Q03463"/>
    </source>
</evidence>
<evidence type="ECO:0000250" key="9">
    <source>
        <dbReference type="UniProtKB" id="Q5EG65"/>
    </source>
</evidence>
<evidence type="ECO:0000250" key="10">
    <source>
        <dbReference type="UniProtKB" id="Q913V3"/>
    </source>
</evidence>
<evidence type="ECO:0000250" key="11">
    <source>
        <dbReference type="UniProtKB" id="Q99IB8"/>
    </source>
</evidence>
<evidence type="ECO:0000250" key="12">
    <source>
        <dbReference type="UniProtKB" id="Q9WMX2"/>
    </source>
</evidence>
<evidence type="ECO:0000255" key="13"/>
<evidence type="ECO:0000255" key="14">
    <source>
        <dbReference type="PROSITE-ProRule" id="PRU00539"/>
    </source>
</evidence>
<evidence type="ECO:0000255" key="15">
    <source>
        <dbReference type="PROSITE-ProRule" id="PRU00541"/>
    </source>
</evidence>
<evidence type="ECO:0000255" key="16">
    <source>
        <dbReference type="PROSITE-ProRule" id="PRU01030"/>
    </source>
</evidence>
<evidence type="ECO:0000255" key="17">
    <source>
        <dbReference type="PROSITE-ProRule" id="PRU01166"/>
    </source>
</evidence>
<evidence type="ECO:0000256" key="18">
    <source>
        <dbReference type="SAM" id="MobiDB-lite"/>
    </source>
</evidence>
<evidence type="ECO:0000269" key="19">
    <source>
    </source>
</evidence>
<evidence type="ECO:0000269" key="20">
    <source>
    </source>
</evidence>
<evidence type="ECO:0000269" key="21">
    <source>
    </source>
</evidence>
<evidence type="ECO:0000269" key="22">
    <source>
    </source>
</evidence>
<evidence type="ECO:0000269" key="23">
    <source>
    </source>
</evidence>
<evidence type="ECO:0000269" key="24">
    <source>
    </source>
</evidence>
<evidence type="ECO:0000269" key="25">
    <source>
    </source>
</evidence>
<evidence type="ECO:0000269" key="26">
    <source>
    </source>
</evidence>
<evidence type="ECO:0000269" key="27">
    <source>
    </source>
</evidence>
<evidence type="ECO:0000269" key="28">
    <source>
    </source>
</evidence>
<evidence type="ECO:0000269" key="29">
    <source>
    </source>
</evidence>
<evidence type="ECO:0000269" key="30">
    <source>
    </source>
</evidence>
<evidence type="ECO:0000269" key="31">
    <source>
    </source>
</evidence>
<evidence type="ECO:0000269" key="32">
    <source>
    </source>
</evidence>
<evidence type="ECO:0000269" key="33">
    <source>
    </source>
</evidence>
<evidence type="ECO:0000269" key="34">
    <source>
    </source>
</evidence>
<evidence type="ECO:0000269" key="35">
    <source>
    </source>
</evidence>
<evidence type="ECO:0000269" key="36">
    <source>
    </source>
</evidence>
<evidence type="ECO:0000269" key="37">
    <source>
    </source>
</evidence>
<evidence type="ECO:0000269" key="38">
    <source>
    </source>
</evidence>
<evidence type="ECO:0000269" key="39">
    <source>
    </source>
</evidence>
<evidence type="ECO:0000269" key="40">
    <source>
    </source>
</evidence>
<evidence type="ECO:0000269" key="41">
    <source>
    </source>
</evidence>
<evidence type="ECO:0000269" key="42">
    <source>
    </source>
</evidence>
<evidence type="ECO:0000269" key="43">
    <source>
    </source>
</evidence>
<evidence type="ECO:0000269" key="44">
    <source>
    </source>
</evidence>
<evidence type="ECO:0000269" key="45">
    <source>
    </source>
</evidence>
<evidence type="ECO:0000269" key="46">
    <source>
    </source>
</evidence>
<evidence type="ECO:0000269" key="47">
    <source>
    </source>
</evidence>
<evidence type="ECO:0000269" key="48">
    <source>
    </source>
</evidence>
<evidence type="ECO:0000269" key="49">
    <source>
    </source>
</evidence>
<evidence type="ECO:0000305" key="50"/>
<evidence type="ECO:0000305" key="51">
    <source>
    </source>
</evidence>
<evidence type="ECO:0000305" key="52">
    <source>
    </source>
</evidence>
<evidence type="ECO:0000305" key="53">
    <source>
    </source>
</evidence>
<evidence type="ECO:0000305" key="54">
    <source>
    </source>
</evidence>
<evidence type="ECO:0000305" key="55">
    <source>
    </source>
</evidence>
<evidence type="ECO:0000305" key="56">
    <source>
    </source>
</evidence>
<evidence type="ECO:0000305" key="57">
    <source>
    </source>
</evidence>
<evidence type="ECO:0000305" key="58">
    <source>
    </source>
</evidence>
<evidence type="ECO:0000305" key="59">
    <source>
    </source>
</evidence>
<evidence type="ECO:0000305" key="60">
    <source>
    </source>
</evidence>
<evidence type="ECO:0000305" key="61">
    <source>
    </source>
</evidence>
<evidence type="ECO:0007744" key="62">
    <source>
        <dbReference type="PDB" id="2K8J"/>
    </source>
</evidence>
<evidence type="ECO:0007744" key="63">
    <source>
        <dbReference type="PDB" id="3OYP"/>
    </source>
</evidence>
<evidence type="ECO:0007744" key="64">
    <source>
        <dbReference type="PDB" id="3P8N"/>
    </source>
</evidence>
<evidence type="ECO:0007744" key="65">
    <source>
        <dbReference type="PDB" id="3P8O"/>
    </source>
</evidence>
<evidence type="ECO:0007744" key="66">
    <source>
        <dbReference type="PDB" id="4A1T"/>
    </source>
</evidence>
<evidence type="ECO:0007744" key="67">
    <source>
        <dbReference type="PDB" id="4A1V"/>
    </source>
</evidence>
<evidence type="ECO:0007744" key="68">
    <source>
        <dbReference type="PDB" id="4A1X"/>
    </source>
</evidence>
<evidence type="ECO:0007744" key="69">
    <source>
        <dbReference type="PDB" id="4I31"/>
    </source>
</evidence>
<evidence type="ECO:0007744" key="70">
    <source>
        <dbReference type="PDB" id="4I32"/>
    </source>
</evidence>
<evidence type="ECO:0007744" key="71">
    <source>
        <dbReference type="PDB" id="4I33"/>
    </source>
</evidence>
<evidence type="ECO:0007744" key="72">
    <source>
        <dbReference type="PDB" id="4JMY"/>
    </source>
</evidence>
<evidence type="ECO:0007744" key="73">
    <source>
        <dbReference type="PDB" id="4KTC"/>
    </source>
</evidence>
<evidence type="ECO:0007829" key="74">
    <source>
        <dbReference type="PDB" id="2K8J"/>
    </source>
</evidence>
<evidence type="ECO:0007829" key="75">
    <source>
        <dbReference type="PDB" id="3P8N"/>
    </source>
</evidence>
<comment type="function">
    <molecule>Mature core protein</molecule>
    <text evidence="4 5 6 11 21 24 25 31 50">Packages viral RNA to form a viral nucleocapsid, and promotes virion budding (Probable). Participates in the viral particle production as a result of its interaction with the non-structural protein 5A (By similarity). Binds RNA and may function as a RNA chaperone to induce the RNA structural rearrangements taking place during virus replication (By similarity). Modulates viral translation initiation by interacting with viral IRES and 40S ribosomal subunit (PubMed:15760888). Affects various cell signaling pathways, host immunity and lipid metabolism (Probable). Prevents the establishment of cellular antiviral state by blocking the interferon-alpha/beta (IFN-alpha/beta) and IFN-gamma signaling pathways and by blocking the formation of phosphorylated STAT1 and promoting ubiquitin-mediated proteasome-dependent degradation of STAT1 (PubMed:15825084, PubMed:16940534). Activates STAT3 leading to cellular transformation (By similarity). Regulates the activity of cellular genes, including c-myc and c-fos (By similarity). May repress the promoter of p53, and sequester CREB3 and SP110 isoform 3/Sp110b in the cytoplasm (PubMed:14559998). Represses cell cycle negative regulating factor CDKN1A, thereby interrupting an important check point of normal cell cycle regulation (By similarity). Targets transcription factors involved in the regulation of inflammatory responses and in the immune response: suppresses NF-kappa-B activation, and activates AP-1 (By similarity). Binds to dendritic cells (DCs) via C1QR1, resulting in down-regulation of T-lymphocytes proliferation (By similarity). Alters lipid metabolism by interacting with hepatocellular proteins involved in lipid accumulation and storage (By similarity). Induces up-regulation of FAS promoter activity, and thereby contributes to the increased triglyceride accumulation in hepatocytes (steatosis) (By similarity).</text>
</comment>
<comment type="function">
    <molecule>Envelope glycoprotein E1</molecule>
    <text evidence="5">Forms a heterodimer with envelope glycoprotein E2, which mediates virus attachment to the host cell, virion internalization through clathrin-dependent endocytosis and fusion with host membrane (By similarity). Fusion with the host cell is most likely mediated by both E1 and E2, through conformational rearrangements of the heterodimer required for fusion rather than a classical class II fusion mechanism (By similarity). E1/E2 heterodimer binds host apolipoproteins such as APOB and APOE thereby forming a lipo-viro-particle (LVP) (By similarity). APOE associated to the LVP allows the initial virus attachment to cell surface receptors such as the heparan sulfate proteoglycans (HSPGs), syndecan-1 (SDC1), syndecan-1 (SDC2), the low-density lipoprotein receptor (LDLR) and scavenger receptor class B type I (SCARB1) (By similarity). The cholesterol transfer activity of SCARB1 allows E2 exposure and binding of E2 to SCARB1 and the tetraspanin CD81 (By similarity). E1/E2 heterodimer binding on CD81 activates the epithelial growth factor receptor (EGFR) signaling pathway (By similarity). Diffusion of the complex E1-E2-EGFR-SCARB1-CD81 to the cell lateral membrane allows further interaction with Claudin 1 (CLDN1) and occludin (OCLN) to finally trigger HCV entry (By similarity).</text>
</comment>
<comment type="function">
    <molecule>Envelope glycoprotein E2</molecule>
    <text evidence="4 5">Forms a heterodimer with envelope glycoprotein E1, which mediates virus attachment to the host cell, virion internalization through clathrin-dependent endocytosis and fusion with host membrane (By similarity). Fusion with the host cell is most likely mediated by both E1 and E2, through conformational rearrangements of the heterodimer required for fusion rather than a classical class II fusion mechanism (By similarity). The interaction between envelope glycoprotein E2 and host apolipoprotein E/APOE allows the proper assembly, maturation and infectivity of the viral particles (By similarity). This interaction is probably promoted via the up-regulation of cellular autophagy by the virus (By similarity). E1/E2 heterodimer binds host apolipoproteins such as APOB and APOE thereby forming a lipo-viro-particle (LVP) (By similarity). APOE associated to the LVP allows the initial virus attachment to cell surface receptors such as the heparan sulfate proteoglycans (HSPGs), syndecan-1 (SDC1), syndecan-1 (SDC2), the low-density lipoprotein receptor (LDLR) and scavenger receptor class B type I (SCARB1) (By similarity). The cholesterol transfer activity of SCARB1 allows E2 exposure and binding of E2 to SCARB1 and the tetraspanin CD81 (By similarity). E1/E2 heterodimer binding on CD81 activates the epithelial growth factor receptor (EGFR) signaling pathway (By similarity). Diffusion of the complex E1-E2-EGFR-SCARB1-CD81 to the cell lateral membrane allows further interaction with Claudin 1 (CLDN1) and occludin (OCLN) to finally trigger HCV entry (By similarity). Inhibits host EIF2AK2/PKR activation, preventing the establishment of an antiviral state (By similarity). Viral ligand for CD209/DC-SIGN and CLEC4M/DC-SIGNR, which are respectively found on dendritic cells (DCs), and on liver sinusoidal endothelial cells and macrophage-like cells of lymph node sinuses (By similarity). These interactions allow the capture of circulating HCV particles by these cells and subsequent facilitated transmission to permissive cells such as hepatocytes and lymphocyte subpopulations (By similarity). The interaction between E2 and host amino acid transporter complex formed by SLC3A2 and SLC7A5/LAT1 may facilitate viral entry into host cell (By similarity).</text>
</comment>
<comment type="function">
    <molecule>Viroporin p7</molecule>
    <text evidence="5 11 35 50">Ion channel protein that acts as a viroporin and plays an essential role in the assembly, envelopment and secretion of viral particles (PubMed:20667830). Regulates the host cell secretory pathway, which induces the intracellular retention of viral glycoproteins and favors assembly of viral particles (By similarity). Creates a pore in acidic organelles and releases Ca(2+) and H(+) in the cytoplasm of infected cells, leading to a productive viral infection (By similarity). High levels of cytoplasmic Ca(2+) may trigger membrane trafficking and transport of viral ER-associated proteins to viroplasms, sites of viral genome replication (Probable). This ionic imbalance induces the assembly of the inflammasome complex, which triggers the maturation of pro-IL-1beta into IL-1beta through the action of caspase-1 (By similarity). Targets also host mitochondria and induces mitochondrial depolarization (By similarity). In addition of its role as a viroporin, acts as a lipid raft adhesion factor (By similarity).</text>
</comment>
<comment type="function">
    <molecule>Protease NS2</molecule>
    <text evidence="3 5 11">Cysteine protease required for the proteolytic auto-cleavage between the non-structural proteins NS2 and NS3 (By similarity). The N-terminus of NS3 is required for the function of NS2 protease (active region NS2-3) (By similarity). Promotes the initiation of viral particle assembly by mediating the interaction between structural and non-structural proteins (By similarity).</text>
</comment>
<comment type="function">
    <molecule>Serine protease/helicase NS3</molecule>
    <text evidence="5 12">Displays three enzymatic activities: serine protease with a chymotrypsin-like fold, NTPase and RNA helicase (By similarity). NS3 serine protease, in association with NS4A, is responsible for the cleavages of NS3-NS4A, NS4A-NS4B, NS4B-NS5A and NS5A-NS5B (By similarity). The NS3/NS4A complex prevents phosphorylation of host IRF3, thus preventing the establishment of dsRNA induced antiviral state (By similarity). The NS3/NS4A complex induces host amino acid transporter component SLC3A2, thus contributing to HCV propagation (By similarity). NS3 RNA helicase binds to RNA and unwinds both dsDNA and dsRNA in the 3' to 5' direction, and likely resolves RNA complicated stable secondary structures in the template strand (By similarity). Binds a single ATP and catalyzes the unzipping of a single base pair of dsRNA (By similarity). Inhibits host antiviral proteins TBK1 and IRF3 thereby preventing the establishment of an antiviral state (By similarity). Cleaves host MAVS/CARDIF thereby preventing the establishment of an antiviral state (By similarity). Cleaves host TICAM1/TRIF, thereby disrupting TLR3 signaling and preventing the establishment of an antiviral state (By similarity).</text>
</comment>
<comment type="function">
    <molecule>Non-structural protein 4A</molecule>
    <text evidence="5 12">Peptide cofactor which forms a non-covalent complex with the N-terminal of NS3 serine protease (By similarity). The NS3/NS4A complex prevents phosphorylation of host IRF3, thus preventing the establishment of dsRNA induced antiviral state (By similarity). The NS3/NS4A complex induces host amino acid transporter component SLC3A2, thus contributing to HCV propagation (By similarity).</text>
</comment>
<comment type="function">
    <molecule>Non-structural protein 4B</molecule>
    <text evidence="5">Induces a specific membrane alteration that serves as a scaffold for the virus replication complex (By similarity). This membrane alteration gives rise to the so-called ER-derived membranous web that contains the replication complex (By similarity). NS4B self-interaction contributes to its function in membranous web formation (By similarity). Promotes host TRIF protein degradation in a CASP8-dependent manner thereby inhibiting host TLR3-mediated interferon signaling (By similarity). Disrupts the interaction between STING and TBK1 contributing to the inhibition of interferon signaling (By similarity).</text>
</comment>
<comment type="function">
    <molecule>Non-structural protein 5A</molecule>
    <text evidence="5 11 12 26 37 40 53 60">Phosphorylated protein that is indispensable for viral replication and assembly (By similarity). Both hypo- and hyperphosphorylated states are required for the viral life cycle (By similarity). The hyperphosphorylated form of NS5A is an inhibitor of viral replication (By similarity). Involved in RNA-binding and especially in binding to the viral genome (PubMed:16126720). Zinc is essential for RNA-binding (By similarity). Participates in the viral particle production as a result of its interaction with the mature viral core protein (By similarity). Its interaction with host VAPB may target the viral replication complex to vesicles (Probable). Down-regulates viral IRES translation initiation (PubMed:31585734). Mediates interferon resistance, presumably by interacting with and inhibiting host EIF2AK2/PKR (By similarity). Prevents BIN1-induced apoptosis (By similarity). Acts as a transcriptional activator of some host genes important for viral replication when localized in the nucleus (Probable) (PubMed:23468497). Via the interaction with host PACSIN2, modulates lipid droplet formation in order to promote virion assembly (By similarity). Modulates TNFRSF21/DR6 signaling pathway for viral propagation (By similarity).</text>
</comment>
<comment type="function">
    <molecule>RNA-directed RNA polymerase</molecule>
    <text evidence="5">RNA-dependent RNA polymerase that performs primer-template recognition and RNA synthesis during viral replication. Initiates RNA transcription/replication at a flavin adenine dinucleotide (FAD), resulting in a 5'- FAD cap on viral RNAs. In this way, recognition of viral 5' RNA by host pattern recognition receptors can be bypassed, thereby evading activation of antiviral pathways.</text>
</comment>
<comment type="catalytic activity">
    <molecule>Serine protease/helicase NS3</molecule>
    <reaction evidence="47">
        <text>Hydrolysis of four peptide bonds in the viral precursor polyprotein, commonly with Asp or Glu in the P6 position, Cys or Thr in P1 and Ser or Ala in P1'.</text>
        <dbReference type="EC" id="3.4.21.98"/>
    </reaction>
</comment>
<comment type="catalytic activity">
    <molecule>Serine protease/helicase NS3</molecule>
    <reaction evidence="34">
        <text>a ribonucleoside 5'-triphosphate + H2O = a ribonucleoside 5'-diphosphate + phosphate + H(+)</text>
        <dbReference type="Rhea" id="RHEA:23680"/>
        <dbReference type="ChEBI" id="CHEBI:15377"/>
        <dbReference type="ChEBI" id="CHEBI:15378"/>
        <dbReference type="ChEBI" id="CHEBI:43474"/>
        <dbReference type="ChEBI" id="CHEBI:57930"/>
        <dbReference type="ChEBI" id="CHEBI:61557"/>
        <dbReference type="EC" id="3.6.1.15"/>
    </reaction>
</comment>
<comment type="catalytic activity">
    <molecule>Serine protease/helicase NS3</molecule>
    <reaction evidence="34">
        <text>ATP + H2O = ADP + phosphate + H(+)</text>
        <dbReference type="Rhea" id="RHEA:13065"/>
        <dbReference type="ChEBI" id="CHEBI:15377"/>
        <dbReference type="ChEBI" id="CHEBI:15378"/>
        <dbReference type="ChEBI" id="CHEBI:30616"/>
        <dbReference type="ChEBI" id="CHEBI:43474"/>
        <dbReference type="ChEBI" id="CHEBI:456216"/>
        <dbReference type="EC" id="3.6.4.13"/>
    </reaction>
</comment>
<comment type="catalytic activity">
    <molecule>RNA-directed RNA polymerase</molecule>
    <reaction evidence="14 20">
        <text>RNA(n) + a ribonucleoside 5'-triphosphate = RNA(n+1) + diphosphate</text>
        <dbReference type="Rhea" id="RHEA:21248"/>
        <dbReference type="Rhea" id="RHEA-COMP:14527"/>
        <dbReference type="Rhea" id="RHEA-COMP:17342"/>
        <dbReference type="ChEBI" id="CHEBI:33019"/>
        <dbReference type="ChEBI" id="CHEBI:61557"/>
        <dbReference type="ChEBI" id="CHEBI:140395"/>
        <dbReference type="EC" id="2.7.7.48"/>
    </reaction>
</comment>
<comment type="cofactor">
    <molecule>Protease NS2</molecule>
    <cofactor evidence="3">
        <name>Zn(2+)</name>
        <dbReference type="ChEBI" id="CHEBI:29105"/>
    </cofactor>
    <text evidence="3">Activity of protease NS2 is dependent on zinc ions and completely inhibited by EDTA. This is probably due to the fact that NS2 protease activity needs NS3 N-terminus that binds a zinc atom (active region NS2-3).</text>
</comment>
<comment type="cofactor">
    <molecule>Serine protease/helicase NS3</molecule>
    <cofactor evidence="47">
        <name>Zn(2+)</name>
        <dbReference type="ChEBI" id="CHEBI:29105"/>
    </cofactor>
    <cofactor evidence="12">
        <name>Mg(2+)</name>
        <dbReference type="ChEBI" id="CHEBI:18420"/>
    </cofactor>
    <text evidence="34 47">Binds 1 zinc ion, which has a structural role (PubMed:9060645). The magnesium ion is essential for the helicase activity (PubMed:20398661).</text>
</comment>
<comment type="cofactor">
    <molecule>RNA-directed RNA polymerase</molecule>
    <cofactor evidence="3">
        <name>Mg(2+)</name>
        <dbReference type="ChEBI" id="CHEBI:18420"/>
    </cofactor>
    <text evidence="3">Binds 2 magnesium ion that constitute a dinuclear catalytic metal center.</text>
</comment>
<comment type="activity regulation">
    <text evidence="5 54">Inhibited by the antiviral drug hexamethylene amiloride (Probable). Inhibition by amantadine appears to be genotype-dependent (Probable). Also inhibited by long-alkyl-chain iminosugar derivatives (By similarity).</text>
</comment>
<comment type="activity regulation">
    <molecule>RNA-directed RNA polymerase</molecule>
    <text evidence="5">Activity is up-regulated by PRK2/PKN2-mediated phosphorylation.</text>
</comment>
<comment type="subunit">
    <molecule>Mature core protein</molecule>
    <text evidence="5 6 8 9 11 21 25 31 32">Homooligomer (By similarity). Interacts with E1 (via C-terminus) (By similarity). Interacts with the non-structural protein 5A (By similarity). Interacts (via N-terminus) with host STAT1 (via SH2 domain); this interaction results in decreased STAT1 phosphorylation and ubiquitin-mediated proteasome-dependent STAT1 degradation, leading to decreased IFN-stimulated gene transcription (PubMed:15825084, PubMed:16940534). Interacts with host STAT3; this interaction constitutively activates STAT3 (By similarity). Interacts with host LTBR receptor (By similarity). Interacts with host TNFRSF1A receptor and possibly induces apoptosis (By similarity). Interacts with host HNRPK (By similarity). Interacts with host YWHAE (By similarity). Interacts with host UBE3A/E6AP (By similarity). Interacts with host DDX3X (By similarity). Interacts with host APOA2 (By similarity). Interacts with host RXRA protein (By similarity). Interacts with host SP110 isoform 3/Sp110b; this interaction sequesters the transcriptional corepressor SP110 away from the nucleus (PubMed:14559998). Interacts with host CREB3 nuclear transcription protein; this interaction triggers cell transformation (By similarity). Interacts with host ACY3 (By similarity). Interacts with host C1QR1 (By similarity). Interacts with host RBM24; this interaction, which enhances the interaction of the mature core protein with 5'-UTR, may inhibit viral translation and favor replication (By similarity). Interacts with host EIF2AK2/PKR; this interaction induces the autophosphorylation of EIF2AK2 (PubMed:17267064). Part of the viral assembly initiation complex composed of NS2, E1, E2, NS3, NS4A, NS5A and the mature core protein (By similarity).</text>
</comment>
<comment type="subunit">
    <molecule>Envelope glycoprotein E1</molecule>
    <text evidence="5 11">Forms a heterodimer with envelope glycoprotein E2 (By similarity). Interacts with mature core protein (By similarity). Interacts with protease NS2 (By similarity). The heterodimer E1/E2 interacts with host CLDN1; this interaction plays a role in viral entry into host cell (By similarity). Interacts with host SPSB2 (via C-terminus) (By similarity). Part of the viral assembly initiation complex composed of NS2, E1, E2, NS3, NS4A, NS5A and the mature core protein (By similarity). Interacts with host NEURL3; this interaction prevents E1 binding to glycoprotein E2 (By similarity).</text>
</comment>
<comment type="subunit">
    <molecule>Envelope glycoprotein E2</molecule>
    <text evidence="5 11 12">Forms a heterodimer with envelope glycoprotein E1 (By similarity). Interacts with host CD81 and SCARB1 receptors; these interactions play a role in viral entry into host cell (By similarity). Interacts with host EIF2AK2/PKR; this interaction inhibits EIF2AK2 and probably allows the virus to evade the innate immune response (By similarity). Interacts with host CD209/DC-SIGN and CLEC4M/DC-SIGNR (By similarity). Interact with host SPCS1; this interaction is essential for viral particle assembly (By similarity). Interacts with protease NS2 (By similarity). The heterodimer E1/E2 interacts with host CLDN1; this interaction plays a role in viral entry into host cell (By similarity). Part of the viral assembly initiation complex composed of NS2, E1, E2, NS3, NS4A, NS5A and the mature core protein (By similarity). Interacts with host SLC3A2/4F2hc; the interaction may facilitate viral entry into host cell (By similarity). Interacts with human PLSCR1 (By similarity).</text>
</comment>
<comment type="subunit">
    <molecule>Viroporin p7</molecule>
    <text evidence="2 5 11">Homohexamer (By similarity). Homoheptamer (By similarity). Interacts with protease NS2 (By similarity).</text>
</comment>
<comment type="subunit">
    <molecule>Protease NS2</molecule>
    <text evidence="5 11">Homodimer (By similarity). Interacts with host SPCS1; this interaction is essential for viral particle assembly (By similarity). Interacts with envelope glycoprotein E1 (By similarity). Interacts with envelope glycoprotein E2 (By similarity). Interacts with viroporin p7 (By similarity). Interacts with serine protease/helicase NS3 (By similarity). Part of the replication complex composed of NS2, NS3, NS4A, NS4B, NS5A and the RNA-directed RNA polymerase embedded in an ER-derived membranous web (By similarity). Part of the viral assembly initiation complex composed of NS2, E1, E2, NS3, NS4A, NS5A and the mature core protein (By similarity).</text>
</comment>
<comment type="subunit">
    <molecule>Serine protease/helicase NS3</molecule>
    <text evidence="3 5 11 12">Interacts with protease NS2 (By similarity). Interacts with non-structural protein 4A; this interaction stabilizes the folding of NS3 serine protease (By similarity). NS3-NS4A interaction is essential for NS3 activation and allows membrane anchorage of the latter (By similarity). NS3/NS4A complex also prevents phosphorylation of host IRF3, thus preventing the establishment of dsRNA induced antiviral state (By similarity). Interacts with host MAVS; this interaction leads to the cleavage and inhibition of host MAVS (By similarity). Interacts with host TICAM1; this interaction leads to the cleavage and inhibition of host TICAM1 (By similarity). Interacts with host TANK-binding kinase/TBK1; this interaction results in the inhibition of the association between TBK1 and IRF3, which leads to the inhibition of IRF3 activation (By similarity). Interacts with host RBM24 (By similarity). Part of the replication complex composed of NS2, NS3, NS4A, NS4B, NS5A and the RNA-directed RNA polymerase embedded in an ER-derived membranous web (By similarity). Part of the viral assembly initiation complex composed of NS2, E1, E2, NS3, NS4A, NS5A and the mature core protein (By similarity).</text>
</comment>
<comment type="subunit">
    <molecule>Non-structural protein 4A</molecule>
    <text evidence="3 5 11 46">Interacts with NS3 serine protease; this interaction stabilizes the folding of NS3 serine protease (By similarity). NS3-NS4A interaction is essential for NS3 activation and allows membrane anchorage of the latter (By similarity). Interacts with non-structural protein 5A (via N-terminus) (PubMed:8985418). Part of the replication complex composed of NS2, NS3, NS4A, NS4B, NS5A and the RNA-directed RNA polymerase embedded in an ER-derived membranous web (By similarity). Part of the viral assembly initiation complex composed of NS2, E1, E2, NS3, NS4A, NS5A and the mature core protein (By similarity).</text>
</comment>
<comment type="subunit">
    <molecule>Non-structural protein 4B</molecule>
    <text evidence="5 11">Homomultimer (By similarity). Interacts with non-structural protein NS5A (By similarity). Interacts with host PLA2G4C; this interaction likely initiates the recruitment of replication complexes to lipid droplets (By similarity). Interacts with host STING; this interaction disrupts the interaction between STING and TBK1 thereby suppressing the interferon signaling (By similarity). Part of the replication complex composed of NS2, NS3, NS4A, NS4B, NS5A and the RNA-directed RNA polymerase embedded in an ER-derived membranous web (By similarity).</text>
</comment>
<comment type="subunit">
    <molecule>Non-structural protein 5A</molecule>
    <text evidence="3 4 5 11 27 30 33 38 46 56">Monomer (By similarity). Homodimer; dimerization is required for RNA-binding (Probable). Interacts with the mature core protein (By similarity). Interacts (via N-terminus) with non-structural protein 4A (PubMed:8985418). Interacts with non-structural protein 4B (By similarity). Interacts with RNA-directed RNA polymerase (By similarity). Part of the viral assembly initiation complex composed of NS2, E1, E2, NS3, NS4A, NS5A and the mature core protein (By similarity). Part of the replication complex composed of NS2, NS3, NS4A, NS4B, NS5A and the RNA-directed RNA polymerase (By similarity). Interacts with host GRB2 (By similarity). Interacts with host BIN1 (By similarity). Interacts with host PIK3R1 (By similarity). Interacts with host SRCAP (By similarity). Interacts with host FKBP8 (PubMed:16844119). Interacts with host VAPB (PubMed:16227268). Interacts with host EIF2AK2/PKR; this interaction leads to disruption of EIF2AK2 dimerization by NS5A and probably allows the virus to evade the innate immune response (PubMed:17451199). Interacts (via N-terminus) with host PACSIN2 (via N-terminus); this interaction attenuates protein kinase C alpha-mediated phosphorylation of PACSIN2 by disrupting the interaction between PACSIN2 and PRKCA (By similarity). Interacts (via N-terminus) with host SRC kinase (via SH2 domain) (By similarity). Interacts with most Src-family kinases (By similarity). Interacts with host IFI27 and SKP2; promotes the ubiquitin-mediated proteasomal degradation of NS5A (By similarity). Interacts with host GPS2 (By similarity). Interacts with host TNFRSF21; this interaction allows the modulation by the virus of JNK, p38 MAPK, STAT3, and Akt signaling pathways in a DR6-dependent manner (By similarity). Interacts (via N-terminus) with host CIDEB (via N-terminus); this interaction seems to regulate the association of HCV particles with APOE (By similarity). Interacts with host CHKA/Choline Kinase-alpha; CHKA bridges host PI4KA and NS5A and potentiates NS5A-stimulated PI4KA activity, which then facilitates the targeting of the ternary complex to the ER for viral replication (By similarity). Interacts with host SPSB2 (via C-terminus); this interaction targets NS5A for ubiquitination and degradation (By similarity). Interacts with host RAB18; this interaction may promote the association of NS5A and other replicase components with lipid droplets (PubMed:23935497). Interacts (via region D2) with host PPIA/CYPA; the interaction stimulates RNA-binding ability of NS5A and is dependent on the peptidyl-prolyl cis-trans isomerase activity of PPIA/CYPA (By similarity). Interacts with host TRIM14; this interaction induces the degradation of NS5A (By similarity).</text>
</comment>
<comment type="subunit">
    <molecule>RNA-directed RNA polymerase</molecule>
    <text evidence="5 20 27 39">Homooligomer (PubMed:11907226). Interacts with non-structural protein 5A (By similarity). Interacts with host VAPB (PubMed:16227268). Interacts with host PRK2/PKN2 (PubMed:25031343). Interacts with host HNRNPA1 and SEPT6; these interactions facilitate the viral replication (By similarity). Part of the replication complex composed of NS2, NS3, NS4A, NS4B, NS5A and the RNA-directed RNA polymerase (By similarity).</text>
</comment>
<comment type="interaction">
    <interactant intactId="EBI-8872843">
        <id>PRO_0000037644</id>
    </interactant>
    <interactant intactId="EBI-8872853">
        <id>PRO_0000037645</id>
        <label>-</label>
        <dbReference type="UniProtKB" id="P26662"/>
    </interactant>
    <organismsDiffer>false</organismsDiffer>
    <experiments>2</experiments>
</comment>
<comment type="interaction">
    <interactant intactId="EBI-9099462">
        <id>PRO_0000037647</id>
    </interactant>
    <interactant intactId="EBI-516580">
        <id>Q07812</id>
        <label>BAX</label>
    </interactant>
    <organismsDiffer>true</organismsDiffer>
    <experiments>3</experiments>
</comment>
<comment type="interaction">
    <interactant intactId="EBI-9099462">
        <id>PRO_0000037647</id>
    </interactant>
    <interactant intactId="EBI-401755">
        <id>P62993</id>
        <label>GRB2</label>
    </interactant>
    <organismsDiffer>true</organismsDiffer>
    <experiments>3</experiments>
</comment>
<comment type="subcellular location">
    <molecule>Core protein precursor</molecule>
    <subcellularLocation>
        <location evidence="22 23 61">Host endoplasmic reticulum membrane</location>
        <topology evidence="13">Single-pass membrane protein</topology>
    </subcellularLocation>
    <subcellularLocation>
        <location evidence="23">Host mitochondrion membrane</location>
        <topology evidence="13">Single-pass type I membrane protein</topology>
    </subcellularLocation>
    <text>The C-terminal transmembrane domain of the core protein precursor contains an ER signal leading the nascent polyprotein to the ER membrane.</text>
</comment>
<comment type="subcellular location">
    <molecule>Mature core protein</molecule>
    <subcellularLocation>
        <location evidence="11">Virion</location>
    </subcellularLocation>
    <subcellularLocation>
        <location evidence="49">Host cytoplasm</location>
    </subcellularLocation>
    <subcellularLocation>
        <location evidence="22 23 49">Host nucleus</location>
    </subcellularLocation>
    <subcellularLocation>
        <location evidence="11">Host lipid droplet</location>
    </subcellularLocation>
    <text evidence="5">Only a minor proportion of core protein is present in the nucleus (By similarity). Probably present on the surface of lipid droplets (By similarity).</text>
</comment>
<comment type="subcellular location">
    <molecule>Envelope glycoprotein E1</molecule>
    <subcellularLocation>
        <location evidence="50">Virion membrane</location>
        <topology evidence="50">Single-pass type I membrane protein</topology>
    </subcellularLocation>
    <subcellularLocation>
        <location>Host endoplasmic reticulum membrane</location>
        <topology evidence="5">Single-pass type I membrane protein</topology>
    </subcellularLocation>
    <text evidence="5">The C-terminal transmembrane domain acts as a signal sequence and forms a hairpin structure before cleavage by host signal peptidase (By similarity). After cleavage, the membrane sequence is retained at the C-terminus of the protein, serving as ER membrane anchor (By similarity). A reorientation of the second hydrophobic stretch occurs after cleavage producing a single reoriented transmembrane domain (By similarity). These events explain the final topology of the protein (By similarity).</text>
</comment>
<comment type="subcellular location">
    <molecule>Envelope glycoprotein E2</molecule>
    <subcellularLocation>
        <location evidence="50">Virion membrane</location>
        <topology evidence="50">Single-pass type I membrane protein</topology>
    </subcellularLocation>
    <subcellularLocation>
        <location>Host endoplasmic reticulum membrane</location>
        <topology evidence="5">Single-pass type I membrane protein</topology>
    </subcellularLocation>
    <subcellularLocation>
        <location evidence="12">Host lipid droplet</location>
    </subcellularLocation>
    <text evidence="5">The C-terminal transmembrane domain acts as a signal sequence and forms a hairpin structure before cleavage by host signal peptidase (By similarity). After cleavage, the membrane sequence is retained at the C-terminus of the protein, serving as ER membrane anchor (By similarity). A reorientation of the second hydrophobic stretch occurs after cleavage producing a single reoriented transmembrane domain (By similarity). These events explain the final topology of the protein (By similarity).</text>
</comment>
<comment type="subcellular location">
    <molecule>Viroporin p7</molecule>
    <subcellularLocation>
        <location evidence="11">Host endoplasmic reticulum membrane</location>
        <topology evidence="11">Multi-pass membrane protein</topology>
    </subcellularLocation>
    <subcellularLocation>
        <location evidence="5">Host mitochondrion</location>
    </subcellularLocation>
    <subcellularLocation>
        <location evidence="11">Host cell membrane</location>
    </subcellularLocation>
    <text evidence="5">The C-terminus of p7 membrane domain acts as a signal sequence (By similarity). After cleavage by host signal peptidase, the membrane sequence is retained at the C-terminus of the protein, serving as ER membrane anchor (By similarity). ER retention of p7 is leaky and a small fraction reaches the plasma membrane (By similarity).</text>
</comment>
<comment type="subcellular location">
    <molecule>Protease NS2</molecule>
    <subcellularLocation>
        <location evidence="4">Host endoplasmic reticulum membrane</location>
        <topology evidence="4">Multi-pass membrane protein</topology>
    </subcellularLocation>
    <subcellularLocation>
        <location evidence="11">Host lipid droplet</location>
    </subcellularLocation>
    <text evidence="11">Probably present on the surface of lipid droplets.</text>
</comment>
<comment type="subcellular location">
    <molecule>Serine protease/helicase NS3</molecule>
    <subcellularLocation>
        <location evidence="50">Host endoplasmic reticulum membrane</location>
        <topology evidence="50">Peripheral membrane protein</topology>
    </subcellularLocation>
    <text evidence="50">NS3 is associated to the ER membrane through its binding to NS4A.</text>
</comment>
<comment type="subcellular location">
    <molecule>Non-structural protein 4A</molecule>
    <subcellularLocation>
        <location evidence="50">Host endoplasmic reticulum membrane</location>
        <topology evidence="50">Single-pass type I membrane protein</topology>
    </subcellularLocation>
    <text evidence="50">Host membrane insertion occurs after processing by the NS3 protease.</text>
</comment>
<comment type="subcellular location">
    <molecule>Non-structural protein 4B</molecule>
    <subcellularLocation>
        <location evidence="5">Host endoplasmic reticulum membrane</location>
        <topology evidence="5">Multi-pass membrane protein</topology>
    </subcellularLocation>
    <text evidence="5">A reorientation of the N-terminus into the ER lumen occurs post-translationally.</text>
</comment>
<comment type="subcellular location">
    <molecule>Non-structural protein 5A</molecule>
    <subcellularLocation>
        <location evidence="27 30">Host endoplasmic reticulum membrane</location>
        <topology evidence="5">Peripheral membrane protein</topology>
    </subcellularLocation>
    <subcellularLocation>
        <location evidence="41">Host cytoplasm</location>
        <location evidence="41">Host perinuclear region</location>
    </subcellularLocation>
    <subcellularLocation>
        <location evidence="30">Host mitochondrion</location>
    </subcellularLocation>
    <subcellularLocation>
        <location evidence="5">Host cytoplasm</location>
    </subcellularLocation>
    <subcellularLocation>
        <location evidence="37">Host nucleus</location>
    </subcellularLocation>
    <subcellularLocation>
        <location evidence="38">Host lipid droplet</location>
    </subcellularLocation>
    <text evidence="5 38">Host membrane insertion occurs after processing by the NS3 protease (By similarity). Localizes at the surface of lipid droplets (PubMed:23935497).</text>
</comment>
<comment type="subcellular location">
    <molecule>RNA-directed RNA polymerase</molecule>
    <subcellularLocation>
        <location evidence="5">Host cytoplasm</location>
    </subcellularLocation>
    <subcellularLocation>
        <location>Host endoplasmic reticulum membrane</location>
        <topology evidence="5">Single-pass type IV membrane protein</topology>
    </subcellularLocation>
    <text evidence="5">Host membrane insertion occurs after processing by the NS3 protease.</text>
</comment>
<comment type="domain">
    <molecule>Envelope glycoprotein E1</molecule>
    <text evidence="5">The transmembrane regions of envelope E1 and E2 glycoproteins are involved in heterodimer formation, ER localization, and assembly of these proteins.</text>
</comment>
<comment type="domain">
    <molecule>Envelope glycoprotein E2</molecule>
    <text evidence="3 5">The transmembrane regions of envelope E1 and E2 glycoproteins are involved in heterodimer formation, ER localization, and assembly of these proteins (By similarity). Envelope E2 glycoprotein contain two highly variable regions called hypervariable region 1 and 2 (HVR1 and HVR2) (By similarity). E2 also contain two segments involved in CD81-binding (By similarity). HVR1 is implicated in the SCARB1-mediated cell entry and probably acts as a regulator of the association of particles with lipids (By similarity).</text>
</comment>
<comment type="domain">
    <molecule>Protease NS2</molecule>
    <text evidence="3">The N-terminus of NS3 is required for the catalytic activity of protease NS2 (By similarity). The minimal catalytic region includes the C-terminus of NS2 and the N-terminus NS3 protease domain (active region NS2-3) (By similarity).</text>
</comment>
<comment type="domain">
    <molecule>Serine protease/helicase NS3</molecule>
    <text evidence="5 47">The N-terminal one-third of serine protease/helicase NS3 contains the protease activity (PubMed:9060645). This region contains a zinc atom that does not belong to the active site, but may play a structural rather than a catalytic role (PubMed:9060645). This region is essential for the activity of protease NS2, maybe by contributing to the folding of the latter (PubMed:9060645). The NTPase/helicase activity is located in the twothirds C-terminus of NS3, this domain contains the NTPase and RNA-binding regions (By similarity).</text>
</comment>
<comment type="domain">
    <molecule>Non-structural protein 4B</molecule>
    <text evidence="11">Contains a glycine zipper region that critically contributes to the biogenesis of functional ER-derived replication organelles.</text>
</comment>
<comment type="domain">
    <molecule>Non-structural protein 5A</molecule>
    <text evidence="5 33 37 48">The N-terminus of NS5A acts as membrane anchor (By similarity). The central part of NS5A contains a variable region called interferon sensitivity determining region (ISDR) and seems to be intrinsically disordered and interacts with NS5B and host EIF2AK2 (PubMed:17451199, PubMed:9525599). The C-terminus of NS5A contains a variable region called variable region 3 (V3) (PubMed:17451199). ISDR and V3 may be involved in sensitivity and/or resistance to IFN-alpha therapy (PubMed:17451199, PubMed:9525599). The C-terminus contains a nuclear localization signal (PubMed:23468497). The SH3-binding domain is involved in the interaction with host BIN1, GRB2 and Src-family kinases (By similarity).</text>
</comment>
<comment type="PTM">
    <molecule>Genome polyprotein</molecule>
    <text evidence="3 5 11 22 43 49">Specific enzymatic cleavages in vivo yield mature proteins (By similarity). The structural proteins, core, E1, E2 and p7 are produced by proteolytic processing by host signal peptidases (By similarity). The core protein is synthesized as a 23 kDa precursor which is retained in the ER membrane through the hydrophobic signal peptide (PubMed:15163730, PubMed:9621068). Cleavage by the signal peptidase releases the 21 kDa mature core protein (PubMed:15163730, PubMed:9621068). The cleavage of the core protein precursor occurs between aminoacids 176 and 188 but the exact cleavage site is not known (By similarity). Some degraded forms of the core protein appear as well during the course of infection (By similarity). The other proteins (p7, NS2, NS3, NS4A, NS4B, NS5A and NS5B) are cleaved by the viral proteases (PubMed:8389908). Autoprocessing between NS2 and NS3 is mediated by the NS2 cysteine protease catalytic domain and regulated by the NS3 N-terminal domain (By similarity).</text>
</comment>
<comment type="PTM">
    <molecule>Mature core protein</molecule>
    <text evidence="7">Phosphorylated by host PKC and PKA.</text>
</comment>
<comment type="PTM">
    <molecule>Mature core protein</molecule>
    <text evidence="8">Ubiquitinated; mediated by UBE3A and leading to core protein subsequent proteasomal degradation.</text>
</comment>
<comment type="PTM">
    <molecule>Envelope glycoprotein E1</molecule>
    <text evidence="5">Highly N-glycosylated.</text>
</comment>
<comment type="PTM">
    <molecule>Envelope glycoprotein E2</molecule>
    <text evidence="5">Highly N-glycosylated.</text>
</comment>
<comment type="PTM">
    <molecule>Protease NS2</molecule>
    <text evidence="5">Palmitoylation is required for NS2/3 autoprocessing and E2 recruitment to membranes.</text>
</comment>
<comment type="PTM">
    <molecule>Non-structural protein 4B</molecule>
    <text evidence="5">Palmitoylated. This modification may play a role in its polymerization or in protein-protein interactions.</text>
</comment>
<comment type="PTM">
    <molecule>Non-structural protein 5A</molecule>
    <text evidence="19 29">Cleaved by host caspases which are probably activated by the viral infection.</text>
</comment>
<comment type="PTM">
    <molecule>Non-structural protein 5A</molecule>
    <text evidence="5">Ubiquitinated (By similarity). Ubiquitination, most probably at Lys-2350, mediated by host IFI27 and SKP2 leads to proteasomal degradation, restricting viral infection (By similarity).</text>
</comment>
<comment type="PTM">
    <molecule>Non-structural protein 5A</molecule>
    <text evidence="3 11 41 42">Phosphorylated on serines in a basal form termed p56 (PubMed:7769656, PubMed:7999043). p58 is a hyperphosphorylated form of p56 (PubMed:7769656, PubMed:7999043). p56 and p58 coexist in the cell in roughly equivalent amounts (PubMed:7999043). Hyperphosphorylation is dependent on the presence of NS4A (PubMed:7999043). Host CSNK1A1/CKI-alpha or RPS6KB1 kinases may be responsible for NS5A phosphorylation (By similarity). Phosphorylated NS5A is involved in viral replication (By similarity).</text>
</comment>
<comment type="PTM">
    <molecule>Non-structural protein 5A</molecule>
    <text evidence="11">Tyrosine phosphorylation is essential for the interaction with host SRC.</text>
</comment>
<comment type="PTM">
    <molecule>RNA-directed RNA polymerase</molecule>
    <text evidence="39">The N-terminus is phosphorylated by host PRK2/PKN2.</text>
</comment>
<comment type="miscellaneous">
    <text evidence="50">Viral particle assembly takes place at the surface of ER-derived membranes in close proximity to lipid droplets. NS2 associates with E1/E2 glycoproteins, NS3 and NS5A, which interacts with the viral RNA and core protein to promote genome encapsidation. The nucleocapsid buds at the ER membrane where E1/E2 glycoproteins are anchored and afterward associate with nascent lipid droplet to acquire APOE and APOC. Secretion of viral particles is probably regulated by viroporin p7.</text>
</comment>
<comment type="miscellaneous">
    <molecule>Non-structural protein 5A</molecule>
    <text evidence="50">Cell culture adaptation of the virus leads to mutations in NS5A, reducing its inhibitory effect on replication.</text>
</comment>
<comment type="miscellaneous">
    <molecule>Mature core protein</molecule>
    <text evidence="45">Exerts viral interference on hepatitis B virus when HCV and HBV coinfect the same cell, by suppressing HBV gene expression, RNA encapsidation and budding.</text>
</comment>
<comment type="similarity">
    <text evidence="50">Belongs to the hepacivirus polyprotein family.</text>
</comment>
<comment type="caution">
    <text evidence="50">The core gene probably also codes for alternative reading frame proteins (ARFPs). Many functions depicted for the core protein might belong to the ARFPs.</text>
</comment>
<dbReference type="EC" id="3.4.22.-" evidence="3"/>
<dbReference type="EC" id="3.4.21.98" evidence="47"/>
<dbReference type="EC" id="3.6.1.15" evidence="34"/>
<dbReference type="EC" id="3.6.4.13" evidence="34"/>
<dbReference type="EC" id="2.7.7.48" evidence="20"/>
<dbReference type="EMBL" id="D90208">
    <property type="protein sequence ID" value="BAA14233.1"/>
    <property type="molecule type" value="Genomic_RNA"/>
</dbReference>
<dbReference type="EMBL" id="D89872">
    <property type="protein sequence ID" value="BAA14035.1"/>
    <property type="molecule type" value="Genomic_RNA"/>
</dbReference>
<dbReference type="EMBL" id="D11397">
    <property type="protein sequence ID" value="BAA20975.1"/>
    <property type="molecule type" value="Genomic_RNA"/>
</dbReference>
<dbReference type="PIR" id="A39253">
    <property type="entry name" value="GNWVCJ"/>
</dbReference>
<dbReference type="PDB" id="1DXP">
    <property type="method" value="X-ray"/>
    <property type="resolution" value="2.40 A"/>
    <property type="chains" value="A/B=1027-1213, C/D=1678-1691"/>
</dbReference>
<dbReference type="PDB" id="1DY8">
    <property type="method" value="X-ray"/>
    <property type="resolution" value="2.40 A"/>
    <property type="chains" value="A/B=1027-1213, C/D=1678-1692"/>
</dbReference>
<dbReference type="PDB" id="1DY9">
    <property type="method" value="X-ray"/>
    <property type="resolution" value="2.10 A"/>
    <property type="chains" value="A/B=1027-1213, C/D=1678-1692"/>
</dbReference>
<dbReference type="PDB" id="1W3C">
    <property type="method" value="X-ray"/>
    <property type="resolution" value="2.30 A"/>
    <property type="chains" value="A/B=1027-1213, C/D=1678-1692"/>
</dbReference>
<dbReference type="PDB" id="2K8J">
    <property type="method" value="NMR"/>
    <property type="chains" value="X=781-809"/>
</dbReference>
<dbReference type="PDB" id="3OYP">
    <property type="method" value="X-ray"/>
    <property type="resolution" value="2.76 A"/>
    <property type="chains" value="A/B=1027-1213, C/D=1678-1691"/>
</dbReference>
<dbReference type="PDB" id="3P8N">
    <property type="method" value="X-ray"/>
    <property type="resolution" value="1.90 A"/>
    <property type="chains" value="A/B=1027-1206, C/D=1678-1691"/>
</dbReference>
<dbReference type="PDB" id="3P8O">
    <property type="method" value="X-ray"/>
    <property type="resolution" value="2.30 A"/>
    <property type="chains" value="A/B=1027-1206, C/D=1678-1691"/>
</dbReference>
<dbReference type="PDB" id="4A1T">
    <property type="method" value="X-ray"/>
    <property type="resolution" value="2.05 A"/>
    <property type="chains" value="A/B=1028-1206, A/B=1678-1690"/>
</dbReference>
<dbReference type="PDB" id="4A1V">
    <property type="method" value="X-ray"/>
    <property type="resolution" value="2.20 A"/>
    <property type="chains" value="A/B=1028-1206, A/B=1678-1690"/>
</dbReference>
<dbReference type="PDB" id="4A1X">
    <property type="method" value="X-ray"/>
    <property type="resolution" value="1.90 A"/>
    <property type="chains" value="A/B=1028-1206"/>
</dbReference>
<dbReference type="PDB" id="4I31">
    <property type="method" value="X-ray"/>
    <property type="resolution" value="1.93 A"/>
    <property type="chains" value="A/B=1027-1206, C/D=1678-1691"/>
</dbReference>
<dbReference type="PDB" id="4I32">
    <property type="method" value="X-ray"/>
    <property type="resolution" value="2.30 A"/>
    <property type="chains" value="A/B=1027-1206, C/D=1678-1691"/>
</dbReference>
<dbReference type="PDB" id="4I33">
    <property type="method" value="X-ray"/>
    <property type="resolution" value="1.90 A"/>
    <property type="chains" value="A/B=1027-1206, C/D=1678-1691"/>
</dbReference>
<dbReference type="PDB" id="4JMY">
    <property type="method" value="X-ray"/>
    <property type="resolution" value="1.95 A"/>
    <property type="chains" value="C/D=1678-1691"/>
</dbReference>
<dbReference type="PDB" id="4KTC">
    <property type="method" value="X-ray"/>
    <property type="resolution" value="2.30 A"/>
    <property type="chains" value="A/C=1028-1213"/>
</dbReference>
<dbReference type="PDBsum" id="1DXP"/>
<dbReference type="PDBsum" id="1DY8"/>
<dbReference type="PDBsum" id="1DY9"/>
<dbReference type="PDBsum" id="1W3C"/>
<dbReference type="PDBsum" id="2K8J"/>
<dbReference type="PDBsum" id="3OYP"/>
<dbReference type="PDBsum" id="3P8N"/>
<dbReference type="PDBsum" id="3P8O"/>
<dbReference type="PDBsum" id="4A1T"/>
<dbReference type="PDBsum" id="4A1V"/>
<dbReference type="PDBsum" id="4A1X"/>
<dbReference type="PDBsum" id="4I31"/>
<dbReference type="PDBsum" id="4I32"/>
<dbReference type="PDBsum" id="4I33"/>
<dbReference type="PDBsum" id="4JMY"/>
<dbReference type="PDBsum" id="4KTC"/>
<dbReference type="BMRB" id="P26662"/>
<dbReference type="SMR" id="P26662"/>
<dbReference type="ELM" id="P26662"/>
<dbReference type="IntAct" id="P26662">
    <property type="interactions" value="5"/>
</dbReference>
<dbReference type="MINT" id="P26662"/>
<dbReference type="BindingDB" id="P26662"/>
<dbReference type="ChEMBL" id="CHEMBL3988603"/>
<dbReference type="DrugBank" id="DB01720">
    <property type="generic name" value="(2Z)-2-(Benzoylamino)-3-[4-(2-bromophenoxy)phenyl]acrylic acid"/>
</dbReference>
<dbReference type="DrugBank" id="DB04137">
    <property type="generic name" value="Guanosine-5'-Triphosphate"/>
</dbReference>
<dbReference type="DrugBank" id="DB04005">
    <property type="generic name" value="Uridine 5'-triphosphate"/>
</dbReference>
<dbReference type="MEROPS" id="S29.001"/>
<dbReference type="GlyGen" id="P26662">
    <property type="glycosylation" value="21 sites"/>
</dbReference>
<dbReference type="iPTMnet" id="P26662"/>
<dbReference type="ABCD" id="P26662">
    <property type="antibodies" value="7 sequenced antibodies"/>
</dbReference>
<dbReference type="euHCVdb" id="D89872"/>
<dbReference type="euHCVdb" id="D90208"/>
<dbReference type="BRENDA" id="3.4.21.98">
    <property type="organism ID" value="17002"/>
</dbReference>
<dbReference type="SABIO-RK" id="P26662"/>
<dbReference type="EvolutionaryTrace" id="P26662"/>
<dbReference type="Proteomes" id="UP000008095">
    <property type="component" value="Segment"/>
</dbReference>
<dbReference type="Proteomes" id="UP000165187">
    <property type="component" value="Genome"/>
</dbReference>
<dbReference type="GO" id="GO:0044167">
    <property type="term" value="C:host cell endoplasmic reticulum membrane"/>
    <property type="evidence" value="ECO:0007669"/>
    <property type="project" value="UniProtKB-SubCell"/>
</dbReference>
<dbReference type="GO" id="GO:0044186">
    <property type="term" value="C:host cell lipid droplet"/>
    <property type="evidence" value="ECO:0007669"/>
    <property type="project" value="UniProtKB-SubCell"/>
</dbReference>
<dbReference type="GO" id="GO:0044191">
    <property type="term" value="C:host cell mitochondrial membrane"/>
    <property type="evidence" value="ECO:0007669"/>
    <property type="project" value="UniProtKB-SubCell"/>
</dbReference>
<dbReference type="GO" id="GO:0042025">
    <property type="term" value="C:host cell nucleus"/>
    <property type="evidence" value="ECO:0007669"/>
    <property type="project" value="UniProtKB-SubCell"/>
</dbReference>
<dbReference type="GO" id="GO:0044220">
    <property type="term" value="C:host cell perinuclear region of cytoplasm"/>
    <property type="evidence" value="ECO:0007669"/>
    <property type="project" value="UniProtKB-SubCell"/>
</dbReference>
<dbReference type="GO" id="GO:0020002">
    <property type="term" value="C:host cell plasma membrane"/>
    <property type="evidence" value="ECO:0007669"/>
    <property type="project" value="UniProtKB-SubCell"/>
</dbReference>
<dbReference type="GO" id="GO:0016020">
    <property type="term" value="C:membrane"/>
    <property type="evidence" value="ECO:0007669"/>
    <property type="project" value="UniProtKB-KW"/>
</dbReference>
<dbReference type="GO" id="GO:0032993">
    <property type="term" value="C:protein-DNA complex"/>
    <property type="evidence" value="ECO:0000315"/>
    <property type="project" value="CAFA"/>
</dbReference>
<dbReference type="GO" id="GO:1990904">
    <property type="term" value="C:ribonucleoprotein complex"/>
    <property type="evidence" value="ECO:0000315"/>
    <property type="project" value="CAFA"/>
</dbReference>
<dbReference type="GO" id="GO:0019031">
    <property type="term" value="C:viral envelope"/>
    <property type="evidence" value="ECO:0007669"/>
    <property type="project" value="UniProtKB-KW"/>
</dbReference>
<dbReference type="GO" id="GO:0019013">
    <property type="term" value="C:viral nucleocapsid"/>
    <property type="evidence" value="ECO:0007669"/>
    <property type="project" value="UniProtKB-KW"/>
</dbReference>
<dbReference type="GO" id="GO:0055036">
    <property type="term" value="C:virion membrane"/>
    <property type="evidence" value="ECO:0007669"/>
    <property type="project" value="UniProtKB-SubCell"/>
</dbReference>
<dbReference type="GO" id="GO:0005524">
    <property type="term" value="F:ATP binding"/>
    <property type="evidence" value="ECO:0007669"/>
    <property type="project" value="UniProtKB-KW"/>
</dbReference>
<dbReference type="GO" id="GO:0016887">
    <property type="term" value="F:ATP hydrolysis activity"/>
    <property type="evidence" value="ECO:0007669"/>
    <property type="project" value="RHEA"/>
</dbReference>
<dbReference type="GO" id="GO:0015267">
    <property type="term" value="F:channel activity"/>
    <property type="evidence" value="ECO:0007669"/>
    <property type="project" value="UniProtKB-KW"/>
</dbReference>
<dbReference type="GO" id="GO:0004197">
    <property type="term" value="F:cysteine-type endopeptidase activity"/>
    <property type="evidence" value="ECO:0007669"/>
    <property type="project" value="InterPro"/>
</dbReference>
<dbReference type="GO" id="GO:0003677">
    <property type="term" value="F:DNA binding"/>
    <property type="evidence" value="ECO:0000315"/>
    <property type="project" value="CAFA"/>
</dbReference>
<dbReference type="GO" id="GO:1990814">
    <property type="term" value="F:DNA/DNA annealing activity"/>
    <property type="evidence" value="ECO:0000315"/>
    <property type="project" value="CAFA"/>
</dbReference>
<dbReference type="GO" id="GO:0003723">
    <property type="term" value="F:RNA binding"/>
    <property type="evidence" value="ECO:0000315"/>
    <property type="project" value="CAFA"/>
</dbReference>
<dbReference type="GO" id="GO:0140691">
    <property type="term" value="F:RNA folding chaperone"/>
    <property type="evidence" value="ECO:0000314"/>
    <property type="project" value="DisProt"/>
</dbReference>
<dbReference type="GO" id="GO:0003724">
    <property type="term" value="F:RNA helicase activity"/>
    <property type="evidence" value="ECO:0000314"/>
    <property type="project" value="CACAO"/>
</dbReference>
<dbReference type="GO" id="GO:0033592">
    <property type="term" value="F:RNA strand annealing activity"/>
    <property type="evidence" value="ECO:0000315"/>
    <property type="project" value="CAFA"/>
</dbReference>
<dbReference type="GO" id="GO:0003968">
    <property type="term" value="F:RNA-directed RNA polymerase activity"/>
    <property type="evidence" value="ECO:0007669"/>
    <property type="project" value="UniProtKB-KW"/>
</dbReference>
<dbReference type="GO" id="GO:0004252">
    <property type="term" value="F:serine-type endopeptidase activity"/>
    <property type="evidence" value="ECO:0007669"/>
    <property type="project" value="InterPro"/>
</dbReference>
<dbReference type="GO" id="GO:0005198">
    <property type="term" value="F:structural molecule activity"/>
    <property type="evidence" value="ECO:0007669"/>
    <property type="project" value="InterPro"/>
</dbReference>
<dbReference type="GO" id="GO:0008270">
    <property type="term" value="F:zinc ion binding"/>
    <property type="evidence" value="ECO:0007669"/>
    <property type="project" value="InterPro"/>
</dbReference>
<dbReference type="GO" id="GO:0075512">
    <property type="term" value="P:clathrin-dependent endocytosis of virus by host cell"/>
    <property type="evidence" value="ECO:0007669"/>
    <property type="project" value="UniProtKB-KW"/>
</dbReference>
<dbReference type="GO" id="GO:0039654">
    <property type="term" value="P:fusion of virus membrane with host endosome membrane"/>
    <property type="evidence" value="ECO:0007669"/>
    <property type="project" value="UniProtKB-KW"/>
</dbReference>
<dbReference type="GO" id="GO:0034220">
    <property type="term" value="P:monoatomic ion transmembrane transport"/>
    <property type="evidence" value="ECO:0007669"/>
    <property type="project" value="UniProtKB-KW"/>
</dbReference>
<dbReference type="GO" id="GO:0006508">
    <property type="term" value="P:proteolysis"/>
    <property type="evidence" value="ECO:0007669"/>
    <property type="project" value="UniProtKB-KW"/>
</dbReference>
<dbReference type="GO" id="GO:0043489">
    <property type="term" value="P:RNA stabilization"/>
    <property type="evidence" value="ECO:0000315"/>
    <property type="project" value="CAFA"/>
</dbReference>
<dbReference type="GO" id="GO:0039520">
    <property type="term" value="P:symbiont-mediated activation of host autophagy"/>
    <property type="evidence" value="ECO:0007669"/>
    <property type="project" value="UniProtKB-KW"/>
</dbReference>
<dbReference type="GO" id="GO:0039645">
    <property type="term" value="P:symbiont-mediated perturbation of host cell cycle G1/S transition checkpoint"/>
    <property type="evidence" value="ECO:0007669"/>
    <property type="project" value="UniProtKB-KW"/>
</dbReference>
<dbReference type="GO" id="GO:0039545">
    <property type="term" value="P:symbiont-mediated suppression of host cytoplasmic pattern recognition receptor signaling pathway via inhibition of MAVS activity"/>
    <property type="evidence" value="ECO:0007669"/>
    <property type="project" value="UniProtKB-KW"/>
</dbReference>
<dbReference type="GO" id="GO:0039563">
    <property type="term" value="P:symbiont-mediated suppression of host JAK-STAT cascade via inhibition of STAT1 activity"/>
    <property type="evidence" value="ECO:0007669"/>
    <property type="project" value="UniProtKB-KW"/>
</dbReference>
<dbReference type="GO" id="GO:0039527">
    <property type="term" value="P:symbiont-mediated suppression of host TRAF-mediated signal transduction"/>
    <property type="evidence" value="ECO:0007669"/>
    <property type="project" value="UniProtKB-KW"/>
</dbReference>
<dbReference type="GO" id="GO:0039502">
    <property type="term" value="P:symbiont-mediated suppression of host type I interferon-mediated signaling pathway"/>
    <property type="evidence" value="ECO:0007669"/>
    <property type="project" value="UniProtKB-KW"/>
</dbReference>
<dbReference type="GO" id="GO:0019087">
    <property type="term" value="P:symbiont-mediated transformation of host cell"/>
    <property type="evidence" value="ECO:0007669"/>
    <property type="project" value="InterPro"/>
</dbReference>
<dbReference type="GO" id="GO:0039694">
    <property type="term" value="P:viral RNA genome replication"/>
    <property type="evidence" value="ECO:0007669"/>
    <property type="project" value="InterPro"/>
</dbReference>
<dbReference type="GO" id="GO:0019062">
    <property type="term" value="P:virion attachment to host cell"/>
    <property type="evidence" value="ECO:0007669"/>
    <property type="project" value="UniProtKB-KW"/>
</dbReference>
<dbReference type="CDD" id="cd17931">
    <property type="entry name" value="DEXHc_viral_Ns3"/>
    <property type="match status" value="1"/>
</dbReference>
<dbReference type="CDD" id="cd20903">
    <property type="entry name" value="HCV_p7"/>
    <property type="match status" value="1"/>
</dbReference>
<dbReference type="CDD" id="cd23202">
    <property type="entry name" value="Hepacivirus_RdRp"/>
    <property type="match status" value="1"/>
</dbReference>
<dbReference type="FunFam" id="1.10.820.10:FF:000001">
    <property type="entry name" value="Genome polyprotein"/>
    <property type="match status" value="1"/>
</dbReference>
<dbReference type="FunFam" id="1.20.1280.150:FF:000001">
    <property type="entry name" value="Genome polyprotein"/>
    <property type="match status" value="1"/>
</dbReference>
<dbReference type="FunFam" id="2.20.25.210:FF:000001">
    <property type="entry name" value="Genome polyprotein"/>
    <property type="match status" value="1"/>
</dbReference>
<dbReference type="FunFam" id="2.20.25.220:FF:000001">
    <property type="entry name" value="Genome polyprotein"/>
    <property type="match status" value="1"/>
</dbReference>
<dbReference type="FunFam" id="2.40.10.10:FF:000029">
    <property type="entry name" value="Genome polyprotein"/>
    <property type="match status" value="1"/>
</dbReference>
<dbReference type="FunFam" id="2.40.10.120:FF:000003">
    <property type="entry name" value="Genome polyprotein"/>
    <property type="match status" value="1"/>
</dbReference>
<dbReference type="FunFam" id="3.30.160.890:FF:000001">
    <property type="entry name" value="Genome polyprotein"/>
    <property type="match status" value="1"/>
</dbReference>
<dbReference type="FunFam" id="3.30.70.270:FF:000015">
    <property type="entry name" value="Genome polyprotein"/>
    <property type="match status" value="1"/>
</dbReference>
<dbReference type="FunFam" id="3.40.50.300:FF:000557">
    <property type="entry name" value="Genome polyprotein"/>
    <property type="match status" value="1"/>
</dbReference>
<dbReference type="FunFam" id="3.40.50.300:FF:000717">
    <property type="entry name" value="Genome polyprotein"/>
    <property type="match status" value="1"/>
</dbReference>
<dbReference type="FunFam" id="4.10.710.10:FF:000001">
    <property type="entry name" value="Genome polyprotein"/>
    <property type="match status" value="1"/>
</dbReference>
<dbReference type="Gene3D" id="2.40.10.120">
    <property type="match status" value="1"/>
</dbReference>
<dbReference type="Gene3D" id="3.30.70.270">
    <property type="match status" value="2"/>
</dbReference>
<dbReference type="Gene3D" id="6.10.250.1610">
    <property type="match status" value="1"/>
</dbReference>
<dbReference type="Gene3D" id="6.10.250.1750">
    <property type="match status" value="1"/>
</dbReference>
<dbReference type="Gene3D" id="6.10.250.2920">
    <property type="match status" value="1"/>
</dbReference>
<dbReference type="Gene3D" id="2.20.25.210">
    <property type="entry name" value="Hepatitis C NS5A, domain 1B"/>
    <property type="match status" value="1"/>
</dbReference>
<dbReference type="Gene3D" id="4.10.710.10">
    <property type="entry name" value="Hepatitis C Virus Capsid Protein, Chain A"/>
    <property type="match status" value="1"/>
</dbReference>
<dbReference type="Gene3D" id="3.30.160.890">
    <property type="entry name" value="Hepatitis C virus envelope glycoprotein E1, chain C"/>
    <property type="match status" value="1"/>
</dbReference>
<dbReference type="Gene3D" id="2.30.30.710">
    <property type="entry name" value="Hepatitis C virus non-structural protein NS2, C-terminal domain"/>
    <property type="match status" value="1"/>
</dbReference>
<dbReference type="Gene3D" id="1.20.1280.150">
    <property type="entry name" value="Hepatitis C virus non-structural protein NS2, N-terminal domain"/>
    <property type="match status" value="1"/>
</dbReference>
<dbReference type="Gene3D" id="2.20.25.220">
    <property type="entry name" value="Hepatitis C virus NS5A, 1B domain"/>
    <property type="match status" value="1"/>
</dbReference>
<dbReference type="Gene3D" id="3.40.50.300">
    <property type="entry name" value="P-loop containing nucleotide triphosphate hydrolases"/>
    <property type="match status" value="2"/>
</dbReference>
<dbReference type="Gene3D" id="1.10.820.10">
    <property type="entry name" value="RNA Helicase Chain A , domain 3"/>
    <property type="match status" value="1"/>
</dbReference>
<dbReference type="Gene3D" id="2.40.10.10">
    <property type="entry name" value="Trypsin-like serine proteases"/>
    <property type="match status" value="1"/>
</dbReference>
<dbReference type="InterPro" id="IPR043502">
    <property type="entry name" value="DNA/RNA_pol_sf"/>
</dbReference>
<dbReference type="InterPro" id="IPR011492">
    <property type="entry name" value="Flavi_DEAD"/>
</dbReference>
<dbReference type="InterPro" id="IPR002521">
    <property type="entry name" value="HCV_Core_C"/>
</dbReference>
<dbReference type="InterPro" id="IPR044896">
    <property type="entry name" value="HCV_core_chain_A"/>
</dbReference>
<dbReference type="InterPro" id="IPR002522">
    <property type="entry name" value="HCV_core_N"/>
</dbReference>
<dbReference type="InterPro" id="IPR002519">
    <property type="entry name" value="HCV_Env"/>
</dbReference>
<dbReference type="InterPro" id="IPR002531">
    <property type="entry name" value="HCV_NS1"/>
</dbReference>
<dbReference type="InterPro" id="IPR002518">
    <property type="entry name" value="HCV_NS2"/>
</dbReference>
<dbReference type="InterPro" id="IPR042205">
    <property type="entry name" value="HCV_NS2_C"/>
</dbReference>
<dbReference type="InterPro" id="IPR042209">
    <property type="entry name" value="HCV_NS2_N"/>
</dbReference>
<dbReference type="InterPro" id="IPR000745">
    <property type="entry name" value="HCV_NS4a"/>
</dbReference>
<dbReference type="InterPro" id="IPR001490">
    <property type="entry name" value="HCV_NS4b"/>
</dbReference>
<dbReference type="InterPro" id="IPR002868">
    <property type="entry name" value="HCV_NS5a"/>
</dbReference>
<dbReference type="InterPro" id="IPR013192">
    <property type="entry name" value="HCV_NS5A_1a"/>
</dbReference>
<dbReference type="InterPro" id="IPR013193">
    <property type="entry name" value="HCV_NS5a_1B_dom"/>
</dbReference>
<dbReference type="InterPro" id="IPR038568">
    <property type="entry name" value="HCV_NS5A_1B_sf"/>
</dbReference>
<dbReference type="InterPro" id="IPR024350">
    <property type="entry name" value="HCV_NS5a_C"/>
</dbReference>
<dbReference type="InterPro" id="IPR049913">
    <property type="entry name" value="HCV_p7"/>
</dbReference>
<dbReference type="InterPro" id="IPR014001">
    <property type="entry name" value="Helicase_ATP-bd"/>
</dbReference>
<dbReference type="InterPro" id="IPR001650">
    <property type="entry name" value="Helicase_C-like"/>
</dbReference>
<dbReference type="InterPro" id="IPR004109">
    <property type="entry name" value="HepC_NS3_protease"/>
</dbReference>
<dbReference type="InterPro" id="IPR054175">
    <property type="entry name" value="NS3_helicase_C"/>
</dbReference>
<dbReference type="InterPro" id="IPR038170">
    <property type="entry name" value="NS5A_1a_sf"/>
</dbReference>
<dbReference type="InterPro" id="IPR027417">
    <property type="entry name" value="P-loop_NTPase"/>
</dbReference>
<dbReference type="InterPro" id="IPR009003">
    <property type="entry name" value="Peptidase_S1_PA"/>
</dbReference>
<dbReference type="InterPro" id="IPR043504">
    <property type="entry name" value="Peptidase_S1_PA_chymotrypsin"/>
</dbReference>
<dbReference type="InterPro" id="IPR043128">
    <property type="entry name" value="Rev_trsase/Diguanyl_cyclase"/>
</dbReference>
<dbReference type="InterPro" id="IPR007094">
    <property type="entry name" value="RNA-dir_pol_PSvirus"/>
</dbReference>
<dbReference type="InterPro" id="IPR002166">
    <property type="entry name" value="RNA_pol_HCV"/>
</dbReference>
<dbReference type="Pfam" id="PF07652">
    <property type="entry name" value="Flavi_DEAD"/>
    <property type="match status" value="1"/>
</dbReference>
<dbReference type="Pfam" id="PF01543">
    <property type="entry name" value="HCV_capsid"/>
    <property type="match status" value="1"/>
</dbReference>
<dbReference type="Pfam" id="PF01542">
    <property type="entry name" value="HCV_core"/>
    <property type="match status" value="1"/>
</dbReference>
<dbReference type="Pfam" id="PF01539">
    <property type="entry name" value="HCV_env"/>
    <property type="match status" value="1"/>
</dbReference>
<dbReference type="Pfam" id="PF01560">
    <property type="entry name" value="HCV_NS1"/>
    <property type="match status" value="1"/>
</dbReference>
<dbReference type="Pfam" id="PF01538">
    <property type="entry name" value="HCV_NS2"/>
    <property type="match status" value="1"/>
</dbReference>
<dbReference type="Pfam" id="PF01006">
    <property type="entry name" value="HCV_NS4a"/>
    <property type="match status" value="1"/>
</dbReference>
<dbReference type="Pfam" id="PF01001">
    <property type="entry name" value="HCV_NS4b"/>
    <property type="match status" value="1"/>
</dbReference>
<dbReference type="Pfam" id="PF01506">
    <property type="entry name" value="HCV_NS5a"/>
    <property type="match status" value="1"/>
</dbReference>
<dbReference type="Pfam" id="PF08300">
    <property type="entry name" value="HCV_NS5a_1a"/>
    <property type="match status" value="1"/>
</dbReference>
<dbReference type="Pfam" id="PF08301">
    <property type="entry name" value="HCV_NS5a_1b"/>
    <property type="match status" value="1"/>
</dbReference>
<dbReference type="Pfam" id="PF12941">
    <property type="entry name" value="HCV_NS5a_C"/>
    <property type="match status" value="1"/>
</dbReference>
<dbReference type="Pfam" id="PF22027">
    <property type="entry name" value="NS3_helicase_C"/>
    <property type="match status" value="1"/>
</dbReference>
<dbReference type="Pfam" id="PF02907">
    <property type="entry name" value="Peptidase_S29"/>
    <property type="match status" value="1"/>
</dbReference>
<dbReference type="Pfam" id="PF00998">
    <property type="entry name" value="RdRP_3"/>
    <property type="match status" value="1"/>
</dbReference>
<dbReference type="SMART" id="SM00487">
    <property type="entry name" value="DEXDc"/>
    <property type="match status" value="1"/>
</dbReference>
<dbReference type="SMART" id="SM00490">
    <property type="entry name" value="HELICc"/>
    <property type="match status" value="1"/>
</dbReference>
<dbReference type="SUPFAM" id="SSF56672">
    <property type="entry name" value="DNA/RNA polymerases"/>
    <property type="match status" value="1"/>
</dbReference>
<dbReference type="SUPFAM" id="SSF52540">
    <property type="entry name" value="P-loop containing nucleoside triphosphate hydrolases"/>
    <property type="match status" value="2"/>
</dbReference>
<dbReference type="SUPFAM" id="SSF50494">
    <property type="entry name" value="Trypsin-like serine proteases"/>
    <property type="match status" value="1"/>
</dbReference>
<dbReference type="PROSITE" id="PS51693">
    <property type="entry name" value="HCV_NS2_PRO"/>
    <property type="match status" value="1"/>
</dbReference>
<dbReference type="PROSITE" id="PS51192">
    <property type="entry name" value="HELICASE_ATP_BIND_1"/>
    <property type="match status" value="1"/>
</dbReference>
<dbReference type="PROSITE" id="PS51194">
    <property type="entry name" value="HELICASE_CTER"/>
    <property type="match status" value="1"/>
</dbReference>
<dbReference type="PROSITE" id="PS51822">
    <property type="entry name" value="HV_PV_NS3_PRO"/>
    <property type="match status" value="1"/>
</dbReference>
<dbReference type="PROSITE" id="PS50507">
    <property type="entry name" value="RDRP_SSRNA_POS"/>
    <property type="match status" value="1"/>
</dbReference>
<organism>
    <name type="scientific">Hepatitis C virus genotype 1b (isolate Japanese)</name>
    <name type="common">HCV</name>
    <dbReference type="NCBI Taxonomy" id="11116"/>
    <lineage>
        <taxon>Viruses</taxon>
        <taxon>Riboviria</taxon>
        <taxon>Orthornavirae</taxon>
        <taxon>Kitrinoviricota</taxon>
        <taxon>Flasuviricetes</taxon>
        <taxon>Amarillovirales</taxon>
        <taxon>Flaviviridae</taxon>
        <taxon>Hepacivirus</taxon>
        <taxon>Hepacivirus hominis</taxon>
    </lineage>
</organism>
<feature type="initiator methionine" description="Removed; by host" evidence="4">
    <location>
        <position position="1"/>
    </location>
</feature>
<feature type="chain" id="PRO_0000450855" description="Genome polyprotein">
    <location>
        <begin position="2"/>
        <end position="3010"/>
    </location>
</feature>
<feature type="chain" id="PRO_0000037637" description="Core protein precursor">
    <location>
        <begin position="2"/>
        <end position="191"/>
    </location>
</feature>
<feature type="chain" id="PRO_0000037638" description="Mature core protein">
    <location>
        <begin position="2"/>
        <end position="177"/>
    </location>
</feature>
<feature type="propeptide" id="PRO_0000037639" description="ER anchor for the core protein, removed in mature form by host signal peptidase" evidence="22">
    <location>
        <begin position="178"/>
        <end position="191"/>
    </location>
</feature>
<feature type="chain" id="PRO_0000037640" description="Envelope glycoprotein E1">
    <location>
        <begin position="192"/>
        <end position="383"/>
    </location>
</feature>
<feature type="chain" id="PRO_0000037641" description="Envelope glycoprotein E2">
    <location>
        <begin position="384"/>
        <end position="746"/>
    </location>
</feature>
<feature type="chain" id="PRO_0000037642" description="Viroporin p7">
    <location>
        <begin position="747"/>
        <end position="809"/>
    </location>
</feature>
<feature type="chain" id="PRO_0000037643" description="Protease NS2" evidence="16">
    <location>
        <begin position="810"/>
        <end position="1026"/>
    </location>
</feature>
<feature type="chain" id="PRO_0000037644" description="Serine protease/helicase NS3">
    <location>
        <begin position="1027"/>
        <end position="1657"/>
    </location>
</feature>
<feature type="chain" id="PRO_0000037645" description="Non-structural protein 4A">
    <location>
        <begin position="1658"/>
        <end position="1711"/>
    </location>
</feature>
<feature type="chain" id="PRO_0000037646" description="Non-structural protein 4B">
    <location>
        <begin position="1712"/>
        <end position="1972"/>
    </location>
</feature>
<feature type="chain" id="PRO_0000037647" description="Non-structural protein 5A">
    <location>
        <begin position="1973"/>
        <end position="2419"/>
    </location>
</feature>
<feature type="chain" id="PRO_0000037648" description="RNA-directed RNA polymerase">
    <location>
        <begin position="2420"/>
        <end position="3010"/>
    </location>
</feature>
<feature type="topological domain" description="Cytoplasmic" evidence="13">
    <location>
        <begin position="2"/>
        <end position="168"/>
    </location>
</feature>
<feature type="transmembrane region" description="Helical" evidence="13">
    <location>
        <begin position="169"/>
        <end position="189"/>
    </location>
</feature>
<feature type="topological domain" description="Lumenal" evidence="5">
    <location>
        <begin position="190"/>
        <end position="358"/>
    </location>
</feature>
<feature type="transmembrane region" description="Helical" evidence="5">
    <location>
        <begin position="359"/>
        <end position="379"/>
    </location>
</feature>
<feature type="topological domain" description="Lumenal" evidence="5">
    <location>
        <begin position="380"/>
        <end position="725"/>
    </location>
</feature>
<feature type="transmembrane region" description="Helical" evidence="5">
    <location>
        <begin position="726"/>
        <end position="746"/>
    </location>
</feature>
<feature type="topological domain" description="Lumenal" evidence="5">
    <location>
        <begin position="747"/>
        <end position="757"/>
    </location>
</feature>
<feature type="transmembrane region" description="Helical" evidence="5">
    <location>
        <begin position="758"/>
        <end position="778"/>
    </location>
</feature>
<feature type="topological domain" description="Cytoplasmic" evidence="5">
    <location>
        <begin position="779"/>
        <end position="781"/>
    </location>
</feature>
<feature type="transmembrane region" description="Helical" evidence="5">
    <location>
        <begin position="782"/>
        <end position="803"/>
    </location>
</feature>
<feature type="topological domain" description="Lumenal" evidence="5">
    <location>
        <begin position="804"/>
        <end position="813"/>
    </location>
</feature>
<feature type="transmembrane region" description="Helical" evidence="12">
    <location>
        <begin position="814"/>
        <end position="834"/>
    </location>
</feature>
<feature type="topological domain" description="Cytoplasmic" evidence="12">
    <location>
        <begin position="835"/>
        <end position="838"/>
    </location>
</feature>
<feature type="transmembrane region" description="Helical" evidence="12">
    <location>
        <begin position="839"/>
        <end position="859"/>
    </location>
</feature>
<feature type="topological domain" description="Lumenal" evidence="12">
    <location>
        <begin position="860"/>
        <end position="881"/>
    </location>
</feature>
<feature type="transmembrane region" description="Helical" evidence="12">
    <location>
        <begin position="882"/>
        <end position="902"/>
    </location>
</feature>
<feature type="topological domain" description="Cytoplasmic" evidence="12">
    <location>
        <begin position="903"/>
        <end position="1657"/>
    </location>
</feature>
<feature type="transmembrane region" description="Helical" evidence="13">
    <location>
        <begin position="1658"/>
        <end position="1678"/>
    </location>
</feature>
<feature type="topological domain" description="Cytoplasmic" evidence="13">
    <location>
        <begin position="1679"/>
        <end position="1805"/>
    </location>
</feature>
<feature type="transmembrane region" description="Helical" evidence="13">
    <location>
        <begin position="1806"/>
        <end position="1826"/>
    </location>
</feature>
<feature type="topological domain" description="Lumenal" evidence="13">
    <location>
        <begin position="1827"/>
        <end position="1828"/>
    </location>
</feature>
<feature type="transmembrane region" description="Helical" evidence="13">
    <location>
        <begin position="1829"/>
        <end position="1849"/>
    </location>
</feature>
<feature type="topological domain" description="Cytoplasmic" evidence="13">
    <location>
        <position position="1850"/>
    </location>
</feature>
<feature type="transmembrane region" description="Helical" evidence="13">
    <location>
        <begin position="1851"/>
        <end position="1871"/>
    </location>
</feature>
<feature type="topological domain" description="Lumenal" evidence="13">
    <location>
        <begin position="1872"/>
        <end position="1881"/>
    </location>
</feature>
<feature type="transmembrane region" description="Helical" evidence="13">
    <location>
        <begin position="1882"/>
        <end position="1902"/>
    </location>
</feature>
<feature type="topological domain" description="Cytoplasmic" evidence="13">
    <location>
        <begin position="1903"/>
        <end position="1972"/>
    </location>
</feature>
<feature type="intramembrane region" evidence="5">
    <location>
        <begin position="1973"/>
        <end position="2002"/>
    </location>
</feature>
<feature type="topological domain" description="Cytoplasmic" evidence="5">
    <location>
        <begin position="2003"/>
        <end position="2989"/>
    </location>
</feature>
<feature type="transmembrane region" description="Helical" evidence="5">
    <location>
        <begin position="2990"/>
        <end position="3010"/>
    </location>
</feature>
<feature type="domain" description="Peptidase C18" evidence="16">
    <location>
        <begin position="903"/>
        <end position="1026"/>
    </location>
</feature>
<feature type="domain" description="Peptidase S29" evidence="17">
    <location>
        <begin position="1027"/>
        <end position="1208"/>
    </location>
</feature>
<feature type="domain" description="Helicase ATP-binding" evidence="15">
    <location>
        <begin position="1217"/>
        <end position="1369"/>
    </location>
</feature>
<feature type="domain" description="RdRp catalytic" evidence="14">
    <location>
        <begin position="2633"/>
        <end position="2751"/>
    </location>
</feature>
<feature type="region of interest" description="Disordered" evidence="5">
    <location>
        <begin position="2"/>
        <end position="75"/>
    </location>
</feature>
<feature type="region of interest" description="Interaction with DDX3X" evidence="9">
    <location>
        <begin position="2"/>
        <end position="59"/>
    </location>
</feature>
<feature type="region of interest" description="Interaction with EIF2AK2/PKR" evidence="32">
    <location>
        <begin position="2"/>
        <end position="58"/>
    </location>
</feature>
<feature type="region of interest" description="Interaction with STAT1" evidence="31">
    <location>
        <begin position="2"/>
        <end position="23"/>
    </location>
</feature>
<feature type="region of interest" description="Important for endoplasmic reticulum and mitochondrial localization" evidence="23">
    <location>
        <begin position="112"/>
        <end position="152"/>
    </location>
</feature>
<feature type="region of interest" description="Interaction with APOA2" evidence="6">
    <location>
        <begin position="122"/>
        <end position="173"/>
    </location>
</feature>
<feature type="region of interest" description="Important for lipid droplets localization" evidence="5">
    <location>
        <begin position="164"/>
        <end position="167"/>
    </location>
</feature>
<feature type="region of interest" description="Important for fusion" evidence="5">
    <location>
        <begin position="265"/>
        <end position="296"/>
    </location>
</feature>
<feature type="region of interest" description="HVR1" evidence="5">
    <location>
        <begin position="385"/>
        <end position="411"/>
    </location>
</feature>
<feature type="region of interest" description="HVR2" evidence="5">
    <location>
        <begin position="474"/>
        <end position="482"/>
    </location>
</feature>
<feature type="region of interest" description="CD81-binding 1" evidence="3">
    <location>
        <begin position="480"/>
        <end position="493"/>
    </location>
</feature>
<feature type="region of interest" description="CD81-binding 2" evidence="3">
    <location>
        <begin position="544"/>
        <end position="551"/>
    </location>
</feature>
<feature type="region of interest" description="EIF2AK2/eIF2-alpha phosphorylation homology domain (PePHD)">
    <location>
        <begin position="660"/>
        <end position="671"/>
    </location>
</feature>
<feature type="region of interest" description="Protease NS2-3" evidence="3">
    <location>
        <begin position="904"/>
        <end position="1206"/>
    </location>
</feature>
<feature type="region of interest" description="Interaction with host SCPS1" evidence="11">
    <location>
        <begin position="929"/>
        <end position="949"/>
    </location>
</feature>
<feature type="region of interest" description="RNA-binding" evidence="3">
    <location>
        <begin position="1486"/>
        <end position="1497"/>
    </location>
</feature>
<feature type="region of interest" description="NS3-binding" evidence="5">
    <location>
        <begin position="1679"/>
        <end position="1690"/>
    </location>
</feature>
<feature type="region of interest" description="Glycine zipper" evidence="11">
    <location>
        <begin position="1833"/>
        <end position="1861"/>
    </location>
</feature>
<feature type="region of interest" description="Membrane-binding" evidence="5">
    <location>
        <begin position="1978"/>
        <end position="1998"/>
    </location>
</feature>
<feature type="region of interest" description="RNA-binding" evidence="5">
    <location>
        <begin position="2005"/>
        <end position="2221"/>
    </location>
</feature>
<feature type="region of interest" description="Transcriptional activation" evidence="13">
    <location>
        <begin position="2120"/>
        <end position="2332"/>
    </location>
</feature>
<feature type="region of interest" description="FKBP8-binding" evidence="30">
    <location>
        <begin position="2120"/>
        <end position="2208"/>
    </location>
</feature>
<feature type="region of interest" description="Interaction with non-structural protein 4A" evidence="46">
    <location>
        <begin position="2135"/>
        <end position="2139"/>
    </location>
</feature>
<feature type="region of interest" description="Disordered" evidence="18">
    <location>
        <begin position="2187"/>
        <end position="2219"/>
    </location>
</feature>
<feature type="region of interest" description="Interaction with host SKP2" evidence="5">
    <location>
        <begin position="2189"/>
        <end position="2441"/>
    </location>
</feature>
<feature type="region of interest" description="ISDR" evidence="48">
    <location>
        <begin position="2206"/>
        <end position="2245"/>
    </location>
</feature>
<feature type="region of interest" description="EIF2AK2/PKR-binding" evidence="13">
    <location>
        <begin position="2210"/>
        <end position="2275"/>
    </location>
</feature>
<feature type="region of interest" description="ISDR" evidence="48">
    <location>
        <begin position="2210"/>
        <end position="2249"/>
    </location>
</feature>
<feature type="region of interest" description="NS4B-binding" evidence="13">
    <location>
        <begin position="2249"/>
        <end position="2306"/>
    </location>
</feature>
<feature type="region of interest" description="Interaction with host IFI27" evidence="5">
    <location>
        <begin position="2332"/>
        <end position="2441"/>
    </location>
</feature>
<feature type="region of interest" description="Disordered" evidence="18">
    <location>
        <begin position="2351"/>
        <end position="2408"/>
    </location>
</feature>
<feature type="region of interest" description="V3">
    <location>
        <begin position="2354"/>
        <end position="2377"/>
    </location>
</feature>
<feature type="short sequence motif" description="Nuclear localization signal" evidence="11">
    <location>
        <begin position="5"/>
        <end position="13"/>
    </location>
</feature>
<feature type="short sequence motif" description="Nuclear localization signal" evidence="11">
    <location>
        <begin position="38"/>
        <end position="43"/>
    </location>
</feature>
<feature type="short sequence motif" description="Nuclear localization signal" evidence="11">
    <location>
        <begin position="58"/>
        <end position="64"/>
    </location>
</feature>
<feature type="short sequence motif" description="Nuclear localization signal" evidence="11">
    <location>
        <begin position="66"/>
        <end position="71"/>
    </location>
</feature>
<feature type="short sequence motif" description="DECH box" evidence="11">
    <location>
        <begin position="1316"/>
        <end position="1319"/>
    </location>
</feature>
<feature type="short sequence motif" description="SH3-binding" evidence="13">
    <location>
        <begin position="2322"/>
        <end position="2325"/>
    </location>
</feature>
<feature type="short sequence motif" description="Nuclear localization signal" evidence="37 51">
    <location>
        <begin position="2326"/>
        <end position="2334"/>
    </location>
</feature>
<feature type="compositionally biased region" description="Basic residues" evidence="18">
    <location>
        <begin position="7"/>
        <end position="16"/>
    </location>
</feature>
<feature type="compositionally biased region" description="Low complexity" evidence="18">
    <location>
        <begin position="32"/>
        <end position="47"/>
    </location>
</feature>
<feature type="compositionally biased region" description="Basic residues" evidence="18">
    <location>
        <begin position="58"/>
        <end position="68"/>
    </location>
</feature>
<feature type="compositionally biased region" description="Low complexity" evidence="18">
    <location>
        <begin position="2194"/>
        <end position="2211"/>
    </location>
</feature>
<feature type="compositionally biased region" description="Polar residues" evidence="18">
    <location>
        <begin position="2351"/>
        <end position="2365"/>
    </location>
</feature>
<feature type="active site" description="For protease NS2 activity; shared with dimeric partner" evidence="16">
    <location>
        <position position="952"/>
    </location>
</feature>
<feature type="active site" description="For protease NS2 activity; shared with dimeric partner" evidence="16">
    <location>
        <position position="972"/>
    </location>
</feature>
<feature type="active site" description="For protease NS2 activity; shared with dimeric partner" evidence="16 58">
    <location>
        <position position="993"/>
    </location>
</feature>
<feature type="active site" description="Charge relay system; for serine protease NS3 activity" evidence="17 57 58 59">
    <location>
        <position position="1083"/>
    </location>
</feature>
<feature type="active site" description="Charge relay system; for serine protease NS3 activity" evidence="17 57 58">
    <location>
        <position position="1107"/>
    </location>
</feature>
<feature type="active site" description="Charge relay system; for serine protease NS3 activity" evidence="17">
    <location>
        <position position="1165"/>
    </location>
</feature>
<feature type="binding site" evidence="17 47">
    <location>
        <position position="1123"/>
    </location>
    <ligand>
        <name>Zn(2+)</name>
        <dbReference type="ChEBI" id="CHEBI:29105"/>
        <label>1</label>
        <note>structural; for NS3 protease activity and NS2/3 auto-cleavage activity</note>
    </ligand>
</feature>
<feature type="binding site" evidence="17 47">
    <location>
        <position position="1125"/>
    </location>
    <ligand>
        <name>Zn(2+)</name>
        <dbReference type="ChEBI" id="CHEBI:29105"/>
        <label>1</label>
        <note>structural; for NS3 protease activity and NS2/3 auto-cleavage activity</note>
    </ligand>
</feature>
<feature type="binding site" evidence="17 47">
    <location>
        <position position="1171"/>
    </location>
    <ligand>
        <name>Zn(2+)</name>
        <dbReference type="ChEBI" id="CHEBI:29105"/>
        <label>1</label>
        <note>structural; for NS3 protease activity and NS2/3 auto-cleavage activity</note>
    </ligand>
</feature>
<feature type="binding site" evidence="17 47">
    <location>
        <position position="1175"/>
    </location>
    <ligand>
        <name>Zn(2+)</name>
        <dbReference type="ChEBI" id="CHEBI:29105"/>
        <label>1</label>
        <note>structural; for NS3 protease activity and NS2/3 auto-cleavage activity</note>
    </ligand>
</feature>
<feature type="binding site" evidence="15">
    <location>
        <begin position="1230"/>
        <end position="1237"/>
    </location>
    <ligand>
        <name>ATP</name>
        <dbReference type="ChEBI" id="CHEBI:30616"/>
    </ligand>
</feature>
<feature type="binding site" evidence="12">
    <location>
        <position position="1237"/>
    </location>
    <ligand>
        <name>Mg(2+)</name>
        <dbReference type="ChEBI" id="CHEBI:18420"/>
        <label>1</label>
        <note>catalytic; for NS3 helicase activity</note>
    </ligand>
</feature>
<feature type="binding site" evidence="12">
    <location>
        <position position="1317"/>
    </location>
    <ligand>
        <name>Mg(2+)</name>
        <dbReference type="ChEBI" id="CHEBI:18420"/>
        <label>1</label>
        <note>catalytic; for NS3 helicase activity</note>
    </ligand>
</feature>
<feature type="binding site" evidence="12">
    <location>
        <position position="2011"/>
    </location>
    <ligand>
        <name>Zn(2+)</name>
        <dbReference type="ChEBI" id="CHEBI:29105"/>
        <label>2</label>
        <note>structural</note>
    </ligand>
</feature>
<feature type="binding site" evidence="12">
    <location>
        <position position="2029"/>
    </location>
    <ligand>
        <name>Zn(2+)</name>
        <dbReference type="ChEBI" id="CHEBI:29105"/>
        <label>2</label>
        <note>structural</note>
    </ligand>
</feature>
<feature type="binding site" evidence="12">
    <location>
        <position position="2031"/>
    </location>
    <ligand>
        <name>Zn(2+)</name>
        <dbReference type="ChEBI" id="CHEBI:29105"/>
        <label>2</label>
        <note>structural</note>
    </ligand>
</feature>
<feature type="binding site" evidence="12">
    <location>
        <position position="2052"/>
    </location>
    <ligand>
        <name>Zn(2+)</name>
        <dbReference type="ChEBI" id="CHEBI:29105"/>
        <label>2</label>
        <note>structural</note>
    </ligand>
</feature>
<feature type="binding site" evidence="3">
    <location>
        <position position="2639"/>
    </location>
    <ligand>
        <name>Mg(2+)</name>
        <dbReference type="ChEBI" id="CHEBI:18420"/>
        <label>2</label>
        <note>catalytic; for RNA-directed RNA polymerase activity</note>
    </ligand>
</feature>
<feature type="binding site" evidence="3">
    <location>
        <position position="2737"/>
    </location>
    <ligand>
        <name>Mg(2+)</name>
        <dbReference type="ChEBI" id="CHEBI:18420"/>
        <label>2</label>
        <note>catalytic; for RNA-directed RNA polymerase activity</note>
    </ligand>
</feature>
<feature type="binding site" evidence="3">
    <location>
        <position position="2738"/>
    </location>
    <ligand>
        <name>Mg(2+)</name>
        <dbReference type="ChEBI" id="CHEBI:18420"/>
        <label>2</label>
        <note>catalytic; for RNA-directed RNA polymerase activity</note>
    </ligand>
</feature>
<feature type="site" description="Cleavage; by signal peptide peptidase" evidence="52">
    <location>
        <begin position="177"/>
        <end position="178"/>
    </location>
</feature>
<feature type="site" description="Cleavage; by host signal peptidase" evidence="28 49">
    <location>
        <begin position="191"/>
        <end position="192"/>
    </location>
</feature>
<feature type="site" description="Cleavage; by host signal peptidase" evidence="28">
    <location>
        <begin position="383"/>
        <end position="384"/>
    </location>
</feature>
<feature type="site" description="Cleavage; by host signal peptidase" evidence="1">
    <location>
        <begin position="746"/>
        <end position="747"/>
    </location>
</feature>
<feature type="site" description="Cleavage; by host signal peptidase" evidence="1">
    <location>
        <begin position="809"/>
        <end position="810"/>
    </location>
</feature>
<feature type="site" description="Cleavage; by protease NS2" evidence="16">
    <location>
        <begin position="1026"/>
        <end position="1027"/>
    </location>
</feature>
<feature type="site" description="Cleavage; by serine protease/helicase NS3" evidence="5">
    <location>
        <begin position="1657"/>
        <end position="1658"/>
    </location>
</feature>
<feature type="site" description="Cleavage; by serine protease/helicase NS3" evidence="5">
    <location>
        <begin position="1711"/>
        <end position="1712"/>
    </location>
</feature>
<feature type="site" description="Cleavage; by serine protease/helicase NS3" evidence="5">
    <location>
        <begin position="1972"/>
        <end position="1973"/>
    </location>
</feature>
<feature type="site" description="Cleavage; by serine protease/helicase NS3" evidence="5">
    <location>
        <begin position="2419"/>
        <end position="2420"/>
    </location>
</feature>
<feature type="modified residue" description="N-acetylserine; by host" evidence="10">
    <location>
        <position position="2"/>
    </location>
</feature>
<feature type="modified residue" description="Phosphoserine; by host" evidence="7">
    <location>
        <position position="53"/>
    </location>
</feature>
<feature type="modified residue" description="Phosphoserine; by host" evidence="7">
    <location>
        <position position="99"/>
    </location>
</feature>
<feature type="modified residue" description="Phosphoserine; by host PKA" evidence="7">
    <location>
        <position position="116"/>
    </location>
</feature>
<feature type="modified residue" description="Phosphoserine; by host; in p56" evidence="41">
    <location>
        <position position="2194"/>
    </location>
</feature>
<feature type="modified residue" description="Phosphoserine; by host; in p58" evidence="41">
    <location>
        <position position="2197"/>
    </location>
</feature>
<feature type="modified residue" description="Phosphoserine; by host; in p58" evidence="41">
    <location>
        <position position="2201"/>
    </location>
</feature>
<feature type="modified residue" description="Phosphoserine; by host; in p58" evidence="41">
    <location>
        <position position="2204"/>
    </location>
</feature>
<feature type="modified residue" description="Phosphoserine; by host; in p58" evidence="11">
    <location>
        <position position="2207"/>
    </location>
</feature>
<feature type="modified residue" description="Phosphoserine; by host; in p58" evidence="11">
    <location>
        <position position="2210"/>
    </location>
</feature>
<feature type="modified residue" description="Phosphoserine; by host" evidence="39">
    <location>
        <position position="2448"/>
    </location>
</feature>
<feature type="modified residue" description="Phosphoserine; by host" evidence="39">
    <location>
        <position position="2461"/>
    </location>
</feature>
<feature type="lipid moiety-binding region" description="S-palmitoyl cysteine; by host" evidence="5">
    <location>
        <position position="922"/>
    </location>
</feature>
<feature type="lipid moiety-binding region" description="S-palmitoyl cysteine; by host" evidence="5">
    <location>
        <position position="1968"/>
    </location>
</feature>
<feature type="lipid moiety-binding region" description="S-palmitoyl cysteine; by host" evidence="5">
    <location>
        <position position="1972"/>
    </location>
</feature>
<feature type="glycosylation site" description="N-linked (GlcNAc...) asparagine; by host" evidence="5">
    <location>
        <position position="196"/>
    </location>
</feature>
<feature type="glycosylation site" description="N-linked (GlcNAc...) asparagine; by host" evidence="5">
    <location>
        <position position="209"/>
    </location>
</feature>
<feature type="glycosylation site" description="N-linked (GlcNAc...) asparagine; by host" evidence="5">
    <location>
        <position position="234"/>
    </location>
</feature>
<feature type="glycosylation site" description="N-linked (GlcNAc...) asparagine; by host" evidence="5">
    <location>
        <position position="305"/>
    </location>
</feature>
<feature type="glycosylation site" description="O-linked (Hex...) threonine; by host" evidence="55">
    <location>
        <position position="385"/>
    </location>
</feature>
<feature type="glycosylation site" description="O-linked (Hex...) threonine; by host" evidence="36">
    <location>
        <position position="396"/>
    </location>
</feature>
<feature type="glycosylation site" description="O-linked (Hex...) serine; by host" evidence="36">
    <location>
        <position position="401"/>
    </location>
</feature>
<feature type="glycosylation site" description="O-linked (Hex...) serine; by host" evidence="36">
    <location>
        <position position="404"/>
    </location>
</feature>
<feature type="glycosylation site" description="N-linked (GlcNAc...) (high mannose) asparagine; by host" evidence="5">
    <location>
        <position position="417"/>
    </location>
</feature>
<feature type="glycosylation site" description="N-linked (GlcNAc...) (high mannose) asparagine; by host" evidence="5">
    <location>
        <position position="423"/>
    </location>
</feature>
<feature type="glycosylation site" description="N-linked (GlcNAc...) (high mannose) asparagine; by host" evidence="5">
    <location>
        <position position="430"/>
    </location>
</feature>
<feature type="glycosylation site" description="N-linked (GlcNAc...) (high mannose) asparagine; by host" evidence="5">
    <location>
        <position position="448"/>
    </location>
</feature>
<feature type="glycosylation site" description="O-linked (Hex...) threonine; by host" evidence="36">
    <location>
        <position position="473"/>
    </location>
</feature>
<feature type="glycosylation site" description="O-linked (Hex...) threonine; by host" evidence="36">
    <location>
        <position position="518"/>
    </location>
</feature>
<feature type="glycosylation site" description="N-linked (GlcNAc...) (high mannose) asparagine; by host" evidence="5">
    <location>
        <position position="532"/>
    </location>
</feature>
<feature type="glycosylation site" description="N-linked (GlcNAc...) (high mannose) asparagine; by host" evidence="5">
    <location>
        <position position="556"/>
    </location>
</feature>
<feature type="glycosylation site" description="N-linked (GlcNAc...) (high mannose) asparagine; by host" evidence="5">
    <location>
        <position position="576"/>
    </location>
</feature>
<feature type="glycosylation site" description="N-linked (GlcNAc...) (high mannose) asparagine; by host" evidence="5">
    <location>
        <position position="623"/>
    </location>
</feature>
<feature type="glycosylation site" description="N-linked (GlcNAc...) (high mannose) asparagine; by host" evidence="5">
    <location>
        <position position="645"/>
    </location>
</feature>
<feature type="disulfide bond" evidence="5">
    <location>
        <begin position="429"/>
        <end position="552"/>
    </location>
</feature>
<feature type="disulfide bond" evidence="5">
    <location>
        <begin position="452"/>
        <end position="459"/>
    </location>
</feature>
<feature type="disulfide bond" evidence="5">
    <location>
        <begin position="486"/>
        <end position="494"/>
    </location>
</feature>
<feature type="disulfide bond" evidence="5">
    <location>
        <begin position="503"/>
        <end position="508"/>
    </location>
</feature>
<feature type="disulfide bond" evidence="5">
    <location>
        <begin position="564"/>
        <end position="569"/>
    </location>
</feature>
<feature type="disulfide bond" evidence="5">
    <location>
        <begin position="581"/>
        <end position="585"/>
    </location>
</feature>
<feature type="disulfide bond" evidence="5">
    <location>
        <begin position="597"/>
        <end position="620"/>
    </location>
</feature>
<feature type="disulfide bond" evidence="5">
    <location>
        <begin position="607"/>
        <end position="644"/>
    </location>
</feature>
<feature type="disulfide bond" evidence="5">
    <location>
        <begin position="652"/>
        <end position="677"/>
    </location>
</feature>
<feature type="cross-link" description="Glycyl lysine isopeptide (Lys-Gly) (interchain with G-Cter in ubiquitin)" evidence="5">
    <location>
        <position position="2350"/>
    </location>
</feature>
<feature type="sequence variant">
    <original>E</original>
    <variation>K</variation>
    <location>
        <position position="464"/>
    </location>
</feature>
<feature type="sequence variant">
    <original>DMPES</original>
    <variation>VVPNI</variation>
    <location>
        <begin position="475"/>
        <end position="479"/>
    </location>
</feature>
<feature type="sequence variant">
    <original>R</original>
    <variation>Q</variation>
    <location>
        <position position="492"/>
    </location>
</feature>
<feature type="sequence variant">
    <original>FGA</original>
    <variation>SGV</variation>
    <location>
        <begin position="522"/>
        <end position="524"/>
    </location>
</feature>
<feature type="sequence variant">
    <original>LLS</original>
    <variation>VLN</variation>
    <location>
        <begin position="538"/>
        <end position="540"/>
    </location>
</feature>
<feature type="sequence variant">
    <original>V</original>
    <variation>I</variation>
    <location>
        <position position="580"/>
    </location>
</feature>
<feature type="sequence variant">
    <original>M</original>
    <variation>L</variation>
    <location>
        <position position="608"/>
    </location>
</feature>
<feature type="sequence variant">
    <original>V</original>
    <variation>I</variation>
    <location>
        <position position="622"/>
    </location>
</feature>
<feature type="sequence variant">
    <original>V</original>
    <variation>I</variation>
    <location>
        <position position="626"/>
    </location>
</feature>
<feature type="sequence variant">
    <original>I</original>
    <variation>V</variation>
    <location>
        <position position="674"/>
    </location>
</feature>
<feature type="sequence variant">
    <original>R</original>
    <variation>Q</variation>
    <location>
        <position position="694"/>
    </location>
</feature>
<feature type="sequence variant">
    <original>I</original>
    <variation>V</variation>
    <location>
        <position position="705"/>
    </location>
</feature>
<feature type="sequence variant">
    <original>A</original>
    <variation>V</variation>
    <location>
        <position position="708"/>
    </location>
</feature>
<feature type="sequence variant">
    <original>FA</original>
    <variation>VV</variation>
    <location>
        <begin position="712"/>
        <end position="713"/>
    </location>
</feature>
<feature type="sequence variant">
    <original>I</original>
    <variation>V</variation>
    <location>
        <position position="719"/>
    </location>
</feature>
<feature type="sequence variant">
    <original>I</original>
    <variation>M</variation>
    <location>
        <position position="906"/>
    </location>
</feature>
<feature type="sequence variant">
    <original>L</original>
    <variation>I</variation>
    <location>
        <position position="983"/>
    </location>
</feature>
<feature type="sequence variant">
    <original>V</original>
    <variation>I</variation>
    <location>
        <position position="1140"/>
    </location>
</feature>
<feature type="sequence variant">
    <original>I</original>
    <variation>V</variation>
    <location>
        <position position="1158"/>
    </location>
</feature>
<feature type="sequence variant">
    <original>L</original>
    <variation>R</variation>
    <location>
        <position position="1252"/>
    </location>
</feature>
<feature type="sequence variant">
    <original>C</original>
    <variation>G</variation>
    <location>
        <position position="1297"/>
    </location>
</feature>
<feature type="sequence variant">
    <original>S</original>
    <variation>W</variation>
    <location>
        <position position="1323"/>
    </location>
</feature>
<feature type="sequence variant">
    <original>L</original>
    <variation>V</variation>
    <location>
        <position position="1477"/>
    </location>
</feature>
<feature type="sequence variant">
    <original>A</original>
    <variation>S</variation>
    <location>
        <position position="1485"/>
    </location>
</feature>
<feature type="sequence variant">
    <original>S</original>
    <variation>T</variation>
    <location>
        <position position="1536"/>
    </location>
</feature>
<feature type="sequence variant">
    <original>L</original>
    <variation>F</variation>
    <location>
        <position position="1583"/>
    </location>
</feature>
<feature type="sequence variant">
    <original>V</original>
    <variation>I</variation>
    <location>
        <position position="1635"/>
    </location>
</feature>
<feature type="sequence variant">
    <original>YI</original>
    <variation>FV</variation>
    <location>
        <begin position="1644"/>
        <end position="1645"/>
    </location>
</feature>
<feature type="sequence variant">
    <original>I</original>
    <variation>V</variation>
    <location>
        <position position="1695"/>
    </location>
</feature>
<feature type="sequence variant">
    <original>Q</original>
    <variation>R</variation>
    <location>
        <position position="1703"/>
    </location>
</feature>
<feature type="sequence variant">
    <original>E</original>
    <variation>A</variation>
    <location>
        <position position="1710"/>
    </location>
</feature>
<feature type="sequence variant">
    <original>S</original>
    <variation>P</variation>
    <location>
        <position position="1713"/>
    </location>
</feature>
<feature type="sequence variant">
    <original>K</original>
    <variation>R</variation>
    <location>
        <position position="1753"/>
    </location>
</feature>
<feature type="sequence variant">
    <original>V</original>
    <variation>A</variation>
    <location>
        <position position="1759"/>
    </location>
</feature>
<feature type="sequence variant">
    <original>V</original>
    <variation>I</variation>
    <location>
        <position position="1839"/>
    </location>
</feature>
<feature type="sequence variant">
    <original>M</original>
    <variation>A</variation>
    <location>
        <position position="1873"/>
    </location>
</feature>
<feature type="sequence variant">
    <original>T</original>
    <variation>A</variation>
    <location>
        <position position="1876"/>
    </location>
</feature>
<feature type="sequence variant">
    <original>V</original>
    <variation>I</variation>
    <location>
        <position position="1896"/>
    </location>
</feature>
<feature type="sequence variant">
    <original>K</original>
    <variation>R</variation>
    <location>
        <position position="1978"/>
    </location>
</feature>
<feature type="sequence variant">
    <original>S</original>
    <variation>T</variation>
    <location>
        <position position="1989"/>
    </location>
</feature>
<feature type="sequence variant">
    <original>R</original>
    <variation>K</variation>
    <location>
        <position position="2002"/>
    </location>
</feature>
<feature type="sequence variant">
    <original>L</original>
    <variation>V</variation>
    <location>
        <position position="2006"/>
    </location>
</feature>
<feature type="sequence variant">
    <original>L</original>
    <variation>F</variation>
    <location>
        <position position="2009"/>
    </location>
</feature>
<feature type="sequence variant">
    <original>V</original>
    <variation>I</variation>
    <location>
        <position position="2093"/>
    </location>
</feature>
<feature type="sequence variant">
    <original>V</original>
    <variation>L</variation>
    <location>
        <position position="2125"/>
    </location>
</feature>
<feature type="sequence variant">
    <original>VCK</original>
    <variation>ACR</variation>
    <location>
        <begin position="2136"/>
        <end position="2138"/>
    </location>
</feature>
<feature type="sequence variant">
    <original>EEVV</original>
    <variation>VDVT</variation>
    <location>
        <begin position="2143"/>
        <end position="2146"/>
    </location>
</feature>
<feature type="sequence variant">
    <original>L</original>
    <variation>P</variation>
    <location>
        <position position="2190"/>
    </location>
</feature>
<feature type="sequence variant">
    <original>P</original>
    <variation>S</variation>
    <location>
        <position position="2196"/>
    </location>
</feature>
<feature type="sequence variant">
    <original>A</original>
    <variation>G</variation>
    <location>
        <position position="2199"/>
    </location>
</feature>
<feature type="sequence variant">
    <original>A</original>
    <variation>V</variation>
    <location>
        <position position="2199"/>
    </location>
</feature>
<feature type="sequence variant">
    <original>S</original>
    <variation>T</variation>
    <location>
        <position position="2200"/>
    </location>
</feature>
<feature type="sequence variant">
    <original>S</original>
    <variation>R</variation>
    <location>
        <position position="2204"/>
    </location>
</feature>
<feature type="sequence variant">
    <original>Q</original>
    <variation>H</variation>
    <location>
        <position position="2205"/>
    </location>
</feature>
<feature type="sequence variant">
    <original>A</original>
    <variation>T</variation>
    <location>
        <position position="2208"/>
    </location>
</feature>
<feature type="sequence variant">
    <original>P</original>
    <variation>H</variation>
    <location>
        <position position="2209"/>
    </location>
</feature>
<feature type="sequence variant">
    <original>P</original>
    <variation>L</variation>
    <location>
        <position position="2209"/>
    </location>
</feature>
<feature type="sequence variant">
    <original>P</original>
    <variation>S</variation>
    <location>
        <position position="2209"/>
    </location>
</feature>
<feature type="sequence variant">
    <original>S</original>
    <variation>P</variation>
    <location>
        <position position="2210"/>
    </location>
</feature>
<feature type="sequence variant">
    <original>L</original>
    <variation>S</variation>
    <location>
        <position position="2211"/>
    </location>
</feature>
<feature type="sequence variant">
    <original>K</original>
    <variation>E</variation>
    <location>
        <position position="2212"/>
    </location>
</feature>
<feature type="sequence variant">
    <original>K</original>
    <variation>R</variation>
    <location>
        <position position="2212"/>
    </location>
</feature>
<feature type="sequence variant">
    <original>T</original>
    <variation>A</variation>
    <location>
        <position position="2214"/>
    </location>
</feature>
<feature type="sequence variant">
    <original>C</original>
    <variation>Y</variation>
    <location>
        <position position="2215"/>
    </location>
</feature>
<feature type="sequence variant">
    <original>T</original>
    <variation>I</variation>
    <location>
        <position position="2216"/>
    </location>
</feature>
<feature type="sequence variant">
    <original>T</original>
    <variation>A</variation>
    <location>
        <position position="2217"/>
    </location>
</feature>
<feature type="sequence variant">
    <original>H</original>
    <variation>A</variation>
    <location>
        <position position="2218"/>
    </location>
</feature>
<feature type="sequence variant">
    <original>H</original>
    <variation>L</variation>
    <location>
        <position position="2218"/>
    </location>
</feature>
<feature type="sequence variant">
    <original>H</original>
    <variation>Q</variation>
    <location>
        <position position="2218"/>
    </location>
</feature>
<feature type="sequence variant">
    <original>H</original>
    <variation>R</variation>
    <location>
        <position position="2218"/>
    </location>
</feature>
<feature type="sequence variant">
    <original>H</original>
    <variation>T</variation>
    <location>
        <position position="2218"/>
    </location>
</feature>
<feature type="sequence variant">
    <original>H</original>
    <variation>R</variation>
    <location>
        <position position="2219"/>
    </location>
</feature>
<feature type="sequence variant">
    <original>H</original>
    <variation>Y</variation>
    <location>
        <position position="2219"/>
    </location>
</feature>
<feature type="sequence variant">
    <original>D</original>
    <variation>G</variation>
    <location>
        <position position="2220"/>
    </location>
</feature>
<feature type="sequence variant">
    <original>P</original>
    <variation>L</variation>
    <location>
        <position position="2222"/>
    </location>
</feature>
<feature type="sequence variant">
    <original>P</original>
    <variation>S</variation>
    <location>
        <position position="2222"/>
    </location>
</feature>
<feature type="sequence variant">
    <original>D</original>
    <variation>G</variation>
    <location>
        <position position="2223"/>
    </location>
</feature>
<feature type="sequence variant">
    <original>A</original>
    <variation>V</variation>
    <location>
        <position position="2224"/>
    </location>
</feature>
<feature type="sequence variant">
    <original>D</original>
    <variation>G</variation>
    <location>
        <position position="2225"/>
    </location>
</feature>
<feature type="sequence variant">
    <original>D</original>
    <variation>N</variation>
    <location>
        <position position="2225"/>
    </location>
</feature>
<feature type="sequence variant">
    <original>I</original>
    <variation>V</variation>
    <location>
        <position position="2227"/>
    </location>
</feature>
<feature type="sequence variant">
    <original>E</original>
    <variation>A</variation>
    <location>
        <position position="2228"/>
    </location>
</feature>
<feature type="sequence variant">
    <original>E</original>
    <variation>D</variation>
    <location>
        <position position="2228"/>
    </location>
</feature>
<feature type="sequence variant">
    <original>E</original>
    <variation>G</variation>
    <location>
        <position position="2228"/>
    </location>
</feature>
<feature type="sequence variant">
    <original>E</original>
    <variation>K</variation>
    <location>
        <position position="2228"/>
    </location>
</feature>
<feature type="sequence variant">
    <original>N</original>
    <variation>D</variation>
    <location>
        <position position="2230"/>
    </location>
</feature>
<feature type="sequence variant">
    <original>N</original>
    <variation>S</variation>
    <location>
        <position position="2230"/>
    </location>
</feature>
<feature type="sequence variant">
    <original>W</original>
    <variation>R</variation>
    <location>
        <position position="2233"/>
    </location>
</feature>
<feature type="sequence variant">
    <original>I</original>
    <variation>L</variation>
    <location>
        <position position="2259"/>
    </location>
</feature>
<feature type="sequence variant">
    <original>V</original>
    <variation>E</variation>
    <location>
        <position position="2262"/>
    </location>
</feature>
<feature type="sequence variant">
    <original>I</original>
    <variation>V</variation>
    <location>
        <position position="2268"/>
    </location>
</feature>
<feature type="sequence variant">
    <original>P</original>
    <variation>A</variation>
    <location>
        <position position="2271"/>
    </location>
</feature>
<feature type="sequence variant">
    <original>PR</original>
    <variation>SK</variation>
    <location>
        <begin position="2278"/>
        <end position="2279"/>
    </location>
</feature>
<feature type="sequence variant">
    <original>D</original>
    <variation>S</variation>
    <location>
        <position position="2303"/>
    </location>
</feature>
<feature type="sequence variant">
    <original>V</original>
    <variation>A</variation>
    <location>
        <position position="2310"/>
    </location>
</feature>
<feature type="sequence variant">
    <original>STKA</original>
    <variation>PTTG</variation>
    <location>
        <begin position="2318"/>
        <end position="2321"/>
    </location>
</feature>
<feature type="sequence variant">
    <original>R</original>
    <variation>K</variation>
    <location>
        <position position="2329"/>
    </location>
</feature>
<feature type="sequence variant">
    <original>G</original>
    <variation>A</variation>
    <location>
        <position position="2367"/>
    </location>
</feature>
<feature type="sequence variant">
    <original>A</original>
    <variation>T</variation>
    <location>
        <position position="2372"/>
    </location>
</feature>
<feature type="sequence variant">
    <original>G</original>
    <variation>E</variation>
    <location>
        <position position="2379"/>
    </location>
</feature>
<feature type="sequence variant">
    <original>V</original>
    <variation>I</variation>
    <location>
        <position position="2382"/>
    </location>
</feature>
<feature type="sequence variant">
    <original>EDV</original>
    <variation>DDI</variation>
    <location>
        <begin position="2414"/>
        <end position="2416"/>
    </location>
</feature>
<feature type="sequence variant">
    <original>R</original>
    <variation>K</variation>
    <location>
        <position position="2673"/>
    </location>
</feature>
<feature type="sequence variant">
    <original>V</original>
    <variation>I</variation>
    <location>
        <position position="2681"/>
    </location>
</feature>
<feature type="sequence variant">
    <original>A</original>
    <variation>S</variation>
    <location>
        <position position="2754"/>
    </location>
</feature>
<feature type="sequence variant">
    <original>A</original>
    <variation>V</variation>
    <location>
        <position position="2757"/>
    </location>
</feature>
<feature type="sequence variant">
    <original>K</original>
    <variation>R</variation>
    <location>
        <position position="2950"/>
    </location>
</feature>
<feature type="mutagenesis site" description="Complete loss of core protein processing by host signal peptidase, no effect on the cleavage at core-E1 junction; when associated with A-140 and A-144." evidence="22">
    <original>L</original>
    <variation>A</variation>
    <location>
        <position position="139"/>
    </location>
</feature>
<feature type="mutagenesis site" description="Complete loss of core protein processing by host signal peptidase, no effect on the cleavage at core-E1 junction; when associated with A-139 and A-144." evidence="22">
    <original>V</original>
    <variation>A</variation>
    <location>
        <position position="140"/>
    </location>
</feature>
<feature type="mutagenesis site" description="Complete loss of core protein processing by host signal peptidase, no effect on the cleavage at core-E1 junction; when associated with A-139 and A-140." evidence="22">
    <original>L</original>
    <variation>A</variation>
    <location>
        <position position="144"/>
    </location>
</feature>
<feature type="mutagenesis site" description="Complete loss of core protein processing by host signal peptidase." evidence="22">
    <original>IF</original>
    <variation>AL</variation>
    <location>
        <begin position="176"/>
        <end position="177"/>
    </location>
</feature>
<feature type="mutagenesis site" description="No effect on processing of the core protein." evidence="22">
    <original>LL</original>
    <variation>VV</variation>
    <location>
        <begin position="178"/>
        <end position="179"/>
    </location>
</feature>
<feature type="mutagenesis site" description="No effect on processing of the core protein." evidence="22">
    <original>LL</original>
    <variation>VV</variation>
    <location>
        <begin position="181"/>
        <end position="182"/>
    </location>
</feature>
<feature type="mutagenesis site" description="No effect on processing of the core protein." evidence="22">
    <original>SC</original>
    <variation>LA</variation>
    <location>
        <begin position="183"/>
        <end position="184"/>
    </location>
</feature>
<feature type="mutagenesis site" description="No effect on processing of the core protein." evidence="22">
    <original>SC</original>
    <variation>LV</variation>
    <location>
        <begin position="183"/>
        <end position="184"/>
    </location>
</feature>
<feature type="mutagenesis site" description="No effect on polyprotein processing." evidence="44">
    <original>C</original>
    <variation>A</variation>
    <location>
        <position position="922"/>
    </location>
</feature>
<feature type="mutagenesis site" description="No effect on polyprotein processing." evidence="44">
    <original>H</original>
    <variation>A</variation>
    <location>
        <position position="932"/>
    </location>
</feature>
<feature type="mutagenesis site" description="Complete loss of protease NS2 activity." evidence="44">
    <original>H</original>
    <variation>A</variation>
    <variation>R</variation>
    <location>
        <position position="952"/>
    </location>
</feature>
<feature type="mutagenesis site" description="Reduced protease NS2 activity." evidence="44">
    <original>E</original>
    <variation>Q</variation>
    <location>
        <position position="972"/>
    </location>
</feature>
<feature type="mutagenesis site" description="No effect on polyprotein processing." evidence="44">
    <original>E</original>
    <variation>Q</variation>
    <location>
        <position position="980"/>
    </location>
</feature>
<feature type="mutagenesis site" description="Complete loss of protease NS2 activity." evidence="44">
    <original>C</original>
    <variation>A</variation>
    <location>
        <position position="993"/>
    </location>
</feature>
<feature type="mutagenesis site" description="No effect on polyprotein processing." evidence="44">
    <original>E</original>
    <variation>Q</variation>
    <location>
        <position position="1009"/>
    </location>
</feature>
<feature type="mutagenesis site" description="No effect on zinc-binding by serine protease NS3." evidence="47">
    <original>C</original>
    <variation>A</variation>
    <location>
        <position position="1042"/>
    </location>
</feature>
<feature type="mutagenesis site" description="No effect on polyprotein processing." evidence="44">
    <original>E</original>
    <variation>Q</variation>
    <location>
        <position position="1058"/>
    </location>
</feature>
<feature type="mutagenesis site" description="No effect on zinc-binding by serine protease NS3." evidence="47">
    <original>C</original>
    <variation>S</variation>
    <location>
        <position position="1073"/>
    </location>
</feature>
<feature type="mutagenesis site" description="No effect on zinc-binding by serine protease NS3." evidence="47">
    <original>C</original>
    <variation>L</variation>
    <location>
        <position position="1078"/>
    </location>
</feature>
<feature type="mutagenesis site" description="Complete loss of serine protease NS3 activity. No effect on zinc-binding by serine protease NS3." evidence="43 44 47">
    <original>H</original>
    <variation>A</variation>
    <location>
        <position position="1083"/>
    </location>
</feature>
<feature type="mutagenesis site" description="Complete loss of serine protease NS3 activity." evidence="43 44">
    <original>D</original>
    <variation>A</variation>
    <location>
        <position position="1107"/>
    </location>
</feature>
<feature type="mutagenesis site" description="Reduced protease NS2 and serine protease NS3 activities." evidence="44">
    <original>C</original>
    <variation>A</variation>
    <location>
        <position position="1123"/>
    </location>
</feature>
<feature type="mutagenesis site" description="Reduced protease NS2 and serine protease NS3 activities." evidence="44">
    <original>C</original>
    <variation>A</variation>
    <location>
        <position position="1125"/>
    </location>
</feature>
<feature type="mutagenesis site" description="No effect on polyprotein processing. No effect on zinc-binding by serine protease/helicase NS3." evidence="44 47">
    <original>H</original>
    <variation>A</variation>
    <location>
        <position position="1136"/>
    </location>
</feature>
<feature type="mutagenesis site" description="Complete loss of serine protease NS3 activity. No effect on zinc-binding by serine protease NS3." evidence="43 44 47">
    <original>S</original>
    <variation>A</variation>
    <location>
        <position position="1165"/>
    </location>
</feature>
<feature type="mutagenesis site" description="Reduced protease NS2 and serine protease NS3 activities." evidence="44">
    <original>C</original>
    <variation>A</variation>
    <location>
        <position position="1171"/>
    </location>
</feature>
<feature type="mutagenesis site" description="No effect on polyprotein processing. Reduces zinc-binding by serine protease NS3." evidence="44 47">
    <original>H</original>
    <variation>A</variation>
    <location>
        <position position="1175"/>
    </location>
</feature>
<feature type="mutagenesis site" description="No effect on polyprotein processing. No effect on zinc-binding by serine protease NS3." evidence="44 47">
    <original>C</original>
    <variation>A</variation>
    <location>
        <position position="1185"/>
    </location>
</feature>
<feature type="mutagenesis site" description="No effect on polyprotein processing." evidence="44">
    <original>E</original>
    <variation>Q</variation>
    <location>
        <position position="1199"/>
    </location>
</feature>
<feature type="mutagenesis site" description="No effect on polyprotein processing." evidence="44">
    <original>E</original>
    <variation>Q</variation>
    <location>
        <position position="1202"/>
    </location>
</feature>
<feature type="mutagenesis site" description="No effect on polyprotein processing. No effect on zinc-binding by serine protease NS3." evidence="44 47">
    <original>H</original>
    <variation>A</variation>
    <location>
        <position position="1227"/>
    </location>
</feature>
<feature type="mutagenesis site" description="No effect on polyprotein processing. No effect on zinc-binding by serine protease NS3." evidence="44 47">
    <original>H</original>
    <variation>A</variation>
    <location>
        <position position="1229"/>
    </location>
</feature>
<feature type="mutagenesis site" description="Complete loss of nuclear translocation of NS5A." evidence="37">
    <original>D</original>
    <variation>E</variation>
    <location>
        <position position="2126"/>
    </location>
</feature>
<feature type="mutagenesis site" description="No effect on NS5A hyperphosphorylation and on down-regulation of viral translation." evidence="40 41">
    <original>S</original>
    <variation>A</variation>
    <location>
        <position position="2194"/>
    </location>
</feature>
<feature type="mutagenesis site" description="No effect on down-regulation of viral translation." evidence="40">
    <original>S</original>
    <variation>D</variation>
    <location>
        <position position="2194"/>
    </location>
</feature>
<feature type="mutagenesis site" description="Loss of NS5A hyperphosphorylation; no effect on down-regulation of viral translation." evidence="40 41">
    <original>S</original>
    <variation>A</variation>
    <location>
        <position position="2197"/>
    </location>
</feature>
<feature type="mutagenesis site" description="No effect on down-regulation of viral translation." evidence="40">
    <original>S</original>
    <variation>D</variation>
    <location>
        <position position="2197"/>
    </location>
</feature>
<feature type="mutagenesis site" description="No effect on NS5A hyperphosphorylation." evidence="41">
    <original>S</original>
    <variation>A</variation>
    <location>
        <position position="2200"/>
    </location>
</feature>
<feature type="mutagenesis site" description="Loss of NS5A hyperphosphorylation. Complete loss of NS5A-induced down-regulation of viral translation." evidence="40 41">
    <original>S</original>
    <variation>A</variation>
    <location>
        <position position="2201"/>
    </location>
</feature>
<feature type="mutagenesis site" description="No effect on down-regulation of viral translation; increased NS5A dimerization." evidence="40">
    <original>S</original>
    <variation>D</variation>
    <location>
        <position position="2201"/>
    </location>
</feature>
<feature type="mutagenesis site" description="No effect on NS5A hyperphosphorylation." evidence="41">
    <original>S</original>
    <variation>A</variation>
    <location>
        <position position="2202"/>
    </location>
</feature>
<feature type="mutagenesis site" description="Loss of NS5A hyperphosphorylation. No effect on down-regulation of viral translation." evidence="40 41">
    <original>S</original>
    <variation>A</variation>
    <location>
        <position position="2204"/>
    </location>
</feature>
<feature type="mutagenesis site" description="Complete loss of NS5A-induced down-regulation of viral translation." evidence="40">
    <original>S</original>
    <variation>D</variation>
    <location>
        <position position="2204"/>
    </location>
</feature>
<feature type="mutagenesis site" description="No effect on NS5A hyperphosphorylation. No effect on down-regulation of viral translation." evidence="40 41">
    <original>S</original>
    <variation>A</variation>
    <location>
        <position position="2207"/>
    </location>
</feature>
<feature type="mutagenesis site" description="No effect on down-regulation of viral translation." evidence="40">
    <original>S</original>
    <variation>D</variation>
    <location>
        <position position="2207"/>
    </location>
</feature>
<feature type="mutagenesis site" description="No effect on NS5A hyperphosphorylation. Complete loss of NS5A-induced down-regulation of viral translation." evidence="40 41">
    <original>S</original>
    <variation>A</variation>
    <location>
        <position position="2210"/>
    </location>
</feature>
<feature type="mutagenesis site" description="No effect on down-regulation of viral translation; increased NS5A dimerization." evidence="40">
    <original>S</original>
    <variation>D</variation>
    <location>
        <position position="2210"/>
    </location>
</feature>
<feature type="mutagenesis site" description="No effect on NS5A hyperphosphorylation." evidence="41">
    <original>S</original>
    <variation>A</variation>
    <location>
        <position position="2221"/>
    </location>
</feature>
<feature type="mutagenesis site" description="Partial loss of RNA-directed RNA polymerase phosphorylation. 60% loss of viral RNA replication." evidence="39">
    <original>S</original>
    <variation>A</variation>
    <location>
        <position position="2448"/>
    </location>
</feature>
<feature type="mutagenesis site" description="Partial loss of RNA-directed RNA polymerase phosphorylation. 30% loss of viral RNA replication." evidence="39">
    <original>S</original>
    <variation>A</variation>
    <location>
        <position position="2461"/>
    </location>
</feature>
<feature type="helix" evidence="74">
    <location>
        <begin position="786"/>
        <end position="801"/>
    </location>
</feature>
<feature type="strand" evidence="75">
    <location>
        <begin position="1030"/>
        <end position="1035"/>
    </location>
</feature>
<feature type="helix" evidence="75">
    <location>
        <begin position="1039"/>
        <end position="1048"/>
    </location>
</feature>
<feature type="strand" evidence="75">
    <location>
        <begin position="1057"/>
        <end position="1063"/>
    </location>
</feature>
<feature type="strand" evidence="75">
    <location>
        <begin position="1068"/>
        <end position="1074"/>
    </location>
</feature>
<feature type="strand" evidence="75">
    <location>
        <begin position="1077"/>
        <end position="1080"/>
    </location>
</feature>
<feature type="helix" evidence="75">
    <location>
        <begin position="1082"/>
        <end position="1085"/>
    </location>
</feature>
<feature type="strand" evidence="75">
    <location>
        <begin position="1090"/>
        <end position="1092"/>
    </location>
</feature>
<feature type="strand" evidence="75">
    <location>
        <begin position="1095"/>
        <end position="1097"/>
    </location>
</feature>
<feature type="strand" evidence="75">
    <location>
        <begin position="1100"/>
        <end position="1103"/>
    </location>
</feature>
<feature type="turn" evidence="75">
    <location>
        <begin position="1104"/>
        <end position="1107"/>
    </location>
</feature>
<feature type="strand" evidence="75">
    <location>
        <begin position="1108"/>
        <end position="1112"/>
    </location>
</feature>
<feature type="strand" evidence="75">
    <location>
        <begin position="1128"/>
        <end position="1133"/>
    </location>
</feature>
<feature type="strand" evidence="75">
    <location>
        <begin position="1139"/>
        <end position="1144"/>
    </location>
</feature>
<feature type="strand" evidence="75">
    <location>
        <begin position="1146"/>
        <end position="1157"/>
    </location>
</feature>
<feature type="helix" evidence="75">
    <location>
        <begin position="1158"/>
        <end position="1161"/>
    </location>
</feature>
<feature type="strand" evidence="75">
    <location>
        <begin position="1168"/>
        <end position="1170"/>
    </location>
</feature>
<feature type="strand" evidence="75">
    <location>
        <begin position="1176"/>
        <end position="1186"/>
    </location>
</feature>
<feature type="strand" evidence="75">
    <location>
        <begin position="1189"/>
        <end position="1197"/>
    </location>
</feature>
<feature type="helix" evidence="75">
    <location>
        <begin position="1198"/>
        <end position="1206"/>
    </location>
</feature>
<feature type="strand" evidence="75">
    <location>
        <begin position="1680"/>
        <end position="1689"/>
    </location>
</feature>
<keyword id="KW-0002">3D-structure</keyword>
<keyword id="KW-0007">Acetylation</keyword>
<keyword id="KW-1072">Activation of host autophagy by virus</keyword>
<keyword id="KW-0053">Apoptosis</keyword>
<keyword id="KW-0067">ATP-binding</keyword>
<keyword id="KW-0167">Capsid protein</keyword>
<keyword id="KW-1165">Clathrin-mediated endocytosis of virus by host</keyword>
<keyword id="KW-1015">Disulfide bond</keyword>
<keyword id="KW-1170">Fusion of virus membrane with host endosomal membrane</keyword>
<keyword id="KW-1168">Fusion of virus membrane with host membrane</keyword>
<keyword id="KW-1078">G1/S host cell cycle checkpoint dysregulation by virus</keyword>
<keyword id="KW-0325">Glycoprotein</keyword>
<keyword id="KW-0347">Helicase</keyword>
<keyword id="KW-1032">Host cell membrane</keyword>
<keyword id="KW-1035">Host cytoplasm</keyword>
<keyword id="KW-1038">Host endoplasmic reticulum</keyword>
<keyword id="KW-1041">Host lipid droplet</keyword>
<keyword id="KW-1043">Host membrane</keyword>
<keyword id="KW-1045">Host mitochondrion</keyword>
<keyword id="KW-1048">Host nucleus</keyword>
<keyword id="KW-0945">Host-virus interaction</keyword>
<keyword id="KW-0378">Hydrolase</keyword>
<keyword id="KW-1090">Inhibition of host innate immune response by virus</keyword>
<keyword id="KW-1114">Inhibition of host interferon signaling pathway by virus</keyword>
<keyword id="KW-1097">Inhibition of host MAVS by virus</keyword>
<keyword id="KW-1113">Inhibition of host RLR pathway by virus</keyword>
<keyword id="KW-1105">Inhibition of host STAT1 by virus</keyword>
<keyword id="KW-1110">Inhibition of host TRAFs by virus</keyword>
<keyword id="KW-0922">Interferon antiviral system evasion</keyword>
<keyword id="KW-0407">Ion channel</keyword>
<keyword id="KW-0406">Ion transport</keyword>
<keyword id="KW-1017">Isopeptide bond</keyword>
<keyword id="KW-0449">Lipoprotein</keyword>
<keyword id="KW-0460">Magnesium</keyword>
<keyword id="KW-0472">Membrane</keyword>
<keyword id="KW-0479">Metal-binding</keyword>
<keyword id="KW-1121">Modulation of host cell cycle by virus</keyword>
<keyword id="KW-0511">Multifunctional enzyme</keyword>
<keyword id="KW-0547">Nucleotide-binding</keyword>
<keyword id="KW-0548">Nucleotidyltransferase</keyword>
<keyword id="KW-0553">Oncogene</keyword>
<keyword id="KW-0564">Palmitate</keyword>
<keyword id="KW-0597">Phosphoprotein</keyword>
<keyword id="KW-0645">Protease</keyword>
<keyword id="KW-0687">Ribonucleoprotein</keyword>
<keyword id="KW-0694">RNA-binding</keyword>
<keyword id="KW-0696">RNA-directed RNA polymerase</keyword>
<keyword id="KW-0720">Serine protease</keyword>
<keyword id="KW-0788">Thiol protease</keyword>
<keyword id="KW-0804">Transcription</keyword>
<keyword id="KW-0805">Transcription regulation</keyword>
<keyword id="KW-0808">Transferase</keyword>
<keyword id="KW-0812">Transmembrane</keyword>
<keyword id="KW-1133">Transmembrane helix</keyword>
<keyword id="KW-0813">Transport</keyword>
<keyword id="KW-0832">Ubl conjugation</keyword>
<keyword id="KW-1161">Viral attachment to host cell</keyword>
<keyword id="KW-0261">Viral envelope protein</keyword>
<keyword id="KW-0899">Viral immunoevasion</keyword>
<keyword id="KW-1182">Viral ion channel</keyword>
<keyword id="KW-0543">Viral nucleoprotein</keyword>
<keyword id="KW-1162">Viral penetration into host cytoplasm</keyword>
<keyword id="KW-0693">Viral RNA replication</keyword>
<keyword id="KW-0946">Virion</keyword>
<keyword id="KW-1164">Virus endocytosis by host</keyword>
<keyword id="KW-1160">Virus entry into host cell</keyword>
<keyword id="KW-0862">Zinc</keyword>
<sequence>MSTNPKPQRKTKRNTNRRPQDVKFPGGGQIVGGVYLLPRRGPRLGVRATRKTSERSQPRGRRQPIPKARRPEGRTWAQPGYPWPLYGNEGMGWAGWLLSPRGSRPSWGPTDPRRRSRNLGKVIDTLTCGFADLMGYIPLVGAPLGGAARALAHGVRVLEDGVNYATGNLPGCSFSIFLLALLSCLTIPASAYEVRNVSGIYHVTNDCSNSSIVYEAADMIMHTPGCVPCVRESNFSRCWVALTPTLAARNSSIPTTTIRRHVDLLVGAAALCSAMYVGDLCGSVFLVSQLFTFSPRRYETVQDCNCSIYPGHVSGHRMAWDMMMNWSPTTALVVSQLLRIPQAVVDMVAGAHWGVLAGLAYYSMVGNWAKVLIVMLLFAGVDGHTHVTGGRVASSTQSLVSWLSQGPSQKIQLVNTNGSWHINRTALNCNDSLQTGFIAALFYAHRFNASGCPERMASCRPIDEFAQGWGPITHDMPESSDQRPYCWHYAPRPCGIVPASQVCGPVYCFTPSPVVVGTTDRFGAPTYSWGENETDVLLLSNTRPPQGNWFGCTWMNSTGFTKTCGGPPCNIGGVGNNTLVCPTDCFRKHPEATYTKCGSGPWLTPRCMVDYPYRLWHYPCTVNFTVFKVRMYVGGVEHRLNAACNWTRGERCDLEDRDRSELSPLLLSTTEWQILPCSFTTLPALSTGLIHLHRNIVDVQYLYGIGSAVVSFAIKWEYILLLFLLLADARVCACLWMMLLIAQAEATLENLVVLNAASVAGAHGLLSFLVFFCAAWYIKGRLVPGAAYALYGVWPLLLLLLALPPRAYAMDREMAASCGGAVFVGLVLLTLSPYYKVFLARLIWWLQYFITRAEAHLQVWVPPLNVRGGRDAIILLTCAVHPELIFDITKLLLAILGPLMVLQAGITRVPYFVRAQGLIRACMLVRKVAGGHYVQMAFMKLAALTGTYVYDHLTPLRDWAHAGLRDLAVAVEPVVFSDMETKLITWGADTAACGDIISGLPVSARRGKEILLGPADSFGEQGWRLLAPITAYSQQTRGLLGCIITSLTGRDKNQVDGEVQVLSTATQSFLATCVNGVCWTVYHGAGSKTLAGPKGPITQMYTNVDQDLVGWPAPPGARSMTPCTCGSSDLYLVTRHADVVPVRRRGDSRGSLLSPRPISYLKGSSGGPLLCPSGHVVGIFRAAVCTRGVAKAVDFIPVESMETTMRSPVFTDNSSPPAVPQTFQVAHLHAPTGSGKSTKVPAAYAAQGYKVLVLNPSVAATLGFGAYMSKAHGIEPNIRTGVRTITTGGPITYSTYCKFLADGGCSGGAYDIIICDECHSTDSTTILGIGTVLDQAETAGARLVVLATATPPGSITVPHPNIEEVALSNTGEIPFYGKAIPIEAIKGGRHLIFCHSKKKCDELAAKLTGLGLNAVAYYRGLDVSVIPTSGDVVVVATDALMTGFTGDFDSVIDCNTCVTQTVDFSLDPTFTIETTTLPQDAVSRAQRRGRTGRGRSGIYRFVTPGERPSGMFDSSVLCECYDAGCAWYELTPAETSVRLRAYLNTPGLPVCQDHLEFWESVFTGLTHIDAHFLSQTKQAGDNLPYLVAYQATVCARAQAPPPSWDQMWKCLIRLKPTLHGPTPLLYRLGAVQNEVTLTHPITKYIMACMSADLEVVTSTWVLVGGVLAALAAYCLTTGSVVIVGRIILSGRPAVIPDREVLYQEFDEMEECASHLPYIEQGMQLAEQFKQKALGLLQTATKQAEAAAPVVESKWRALEVFWAKHMWNFISGIQYLAGLSTLPGNPAIASLMAFTASITSPLTTQNTLLFNILGGWVAAQLAPPSAASAFVGAGIAGAAVGSIGLGKVLVDILAGYGAGVAGALVAFKVMSGEMPSTEDLVNLLPAILSPGALVVGVVCAAILRRHVGPGEGAVQWMNRLIAFASRGNHVSPTHYVPESDAAARVTQILSSLTITQLLKRLHQWINEDCSTPCSGSWLKDVWDWICTVLSDFKTWLQSKLLPRLPGLPFLSCQRGYKGVWRGDGIMQTTCPCGAQITGHVKNGSMRIVGPKTCSNTWHGTFPINAYTTGPCTPSPAPNYSRALWRVAAEEYVEVTRVGDFHYVTGMTTDNVKCPCQVPAPEFFTEVDGVRLHRYAPVCKPLLREEVVFQVGLNQYLVGSQLPCEPEPDVAVLTSMLTDPSHITAETAKRRLARGSPPSLASSSASQLSAPSLKATCTTHHDSPDADLIEANLLWRQEMGGNITRVESENKVVILDSFDPIRAVEDEREISVPAEILRKPRKFPPALPIWARPDYNPPLLESWKDPDYVPPVVHGCPLPSTKAPPIPPPRRKRTVVLTESTVSSALAELATKTFGSSGSSAVDSGTATGPPDQASDDGDKGSDVESYSSMPPLEGEPGDPDLSDGSWSTVSGEAGEDVVCCSMSYTWTGALITPCAAEESKLPINPLSNSLLRHHSMVYSTTSRSASLRQKKVTFDRLQVLDDHYRDVLKEMKAKASTVKARLLSIEEACKLTPPHSAKSKFGYGAKDVRSLSSRAVNHIRSVWEDLLEDTETPIDTTIMAKNEVFCVQPEKGGRKPARLIVFPDLGVRVCEKMALYDVVSTLPQAVMGPSYGFQYSPGQRVEFLVNTWKSKKCPMGFSYDTRCFDSTVTENDIRTEESIYQCCDLAPEARQAIRSLTERLYVGGPLTNSKGQNCGYRRCRASGVLTTSCGNTLTCYLKATAACRAAKLQDCTMLVNGDDLVVICESAGTQEDAAALRAFTEAMTRYSAPPGDPPQPEYDLELITSCSSNVSVAHDASGKRVYYLTRDPTTPLARAAWETVRHTPVNSWLGNIIMYAPTLWARMILMTHFFSILLAQEQLEKALDCQIYGACYSIEPLDLPQIIERLHGLSAFSLHSYSPGEINRVASCLRKLGVPPLRVWRHRARSVRAKLLSQGGRAATCGKYLFNWAVKTKLKLTPIPAASQLDLSGWFVAGYNGGDIYHSLSRARPRWFMLCLLLLSVGVGIYLLPNR</sequence>
<name>POLG_HCVJA</name>
<organismHost>
    <name type="scientific">Homo sapiens</name>
    <name type="common">Human</name>
    <dbReference type="NCBI Taxonomy" id="9606"/>
</organismHost>
<accession>P26662</accession>
<accession>P89966</accession>
<accession>Q81755</accession>
<reference key="1">
    <citation type="journal article" date="1990" name="Proc. Natl. Acad. Sci. U.S.A.">
        <title>Molecular cloning of the human hepatitis C virus genome from Japanese patients with non-A, non-B hepatitis.</title>
        <authorList>
            <person name="Kato N."/>
            <person name="Hijikata M."/>
            <person name="Ootsuyama Y."/>
            <person name="Nakagawa M."/>
            <person name="Ohkoshi S."/>
            <person name="Sugimura T."/>
            <person name="Shimotohno K."/>
        </authorList>
    </citation>
    <scope>NUCLEOTIDE SEQUENCE [GENOMIC RNA]</scope>
</reference>
<reference key="2">
    <citation type="journal article" date="1991" name="FEBS Lett.">
        <title>Molecular structure of the Japanese hepatitis C viral genome.</title>
        <authorList>
            <person name="Kato N."/>
            <person name="Hijikata M."/>
            <person name="Nakagawa M."/>
            <person name="Ootsuyama Y."/>
            <person name="Muraiso K."/>
            <person name="Ohkoshi S."/>
            <person name="Shimotohno K."/>
        </authorList>
    </citation>
    <scope>DISCUSSION OF SEQUENCE</scope>
</reference>
<reference key="3">
    <citation type="submission" date="1997-01" db="EMBL/GenBank/DDBJ databases">
        <authorList>
            <person name="Tanaka T."/>
        </authorList>
    </citation>
    <scope>NUCLEOTIDE SEQUENCE [GENOMIC RNA]</scope>
</reference>
<reference key="4">
    <citation type="journal article" date="1993" name="J. Virol.">
        <title>Two distinct proteinase activities required for the processing of a putative nonstructural precursor protein of hepatitis C virus.</title>
        <authorList>
            <person name="Hijikata M."/>
            <person name="Mizushima H."/>
            <person name="Akagi T."/>
            <person name="Mori S."/>
            <person name="Kakiuchi N."/>
            <person name="Kato N."/>
            <person name="Tanaka T."/>
            <person name="Kimura K."/>
            <person name="Shimotohno K."/>
        </authorList>
    </citation>
    <scope>NUCLEOTIDE SEQUENCE [GENOMIC RNA] OF 723-1908</scope>
    <scope>IDENTIFICATION (PROTEASE NS2)</scope>
    <scope>MUTAGENESIS OF CYS-922; HIS-932; HIS-952; GLU-972; GLU-980; CYS-993; GLU-1009; GLU-1058; HIS-1083; ASP-1107; CYS-1123; CYS-1125; HIS-1136; SER-1165; CYS-1171; HIS-1175; CYS-1185; GLU-1199; GLU-1202; HIS-1227 AND HIS-1229</scope>
    <scope>IDENTIFICATION (SERINE PROTEASE/HELICASE NS3)</scope>
    <scope>ACTIVE SITE (SERINE PROTEASE/HELICASE NS3)</scope>
</reference>
<reference key="5">
    <citation type="journal article" date="1991" name="Proc. Natl. Acad. Sci. U.S.A.">
        <title>Gene mapping of the putative structural region of the hepatitis C virus genome by in vitro processing analysis.</title>
        <authorList>
            <person name="Hijikata M."/>
            <person name="Kato N."/>
            <person name="Ootsuyama Y."/>
            <person name="Nakagawa M."/>
            <person name="Shimotohno K."/>
        </authorList>
    </citation>
    <scope>PROTEOLYTIC CLEAVAGE (GENOME POLYPROTEIN)</scope>
</reference>
<reference key="6">
    <citation type="journal article" date="1993" name="J. Virol.">
        <title>Suppression of hepatitis B virus expression and replication by hepatitis C virus core protein in HuH-7 cells.</title>
        <authorList>
            <person name="Shih C.-M."/>
            <person name="Lo S.J."/>
            <person name="Miyamura T."/>
            <person name="Chen S.-Y."/>
            <person name="Lee Y.-H.W."/>
        </authorList>
    </citation>
    <scope>INHIBITION OF HEPATITIS B VIRUS GENE EXPRESSION</scope>
</reference>
<reference key="7">
    <citation type="journal article" date="1993" name="J. Virol.">
        <title>Nonstructural protein 3 of the hepatitis C virus encodes a serine-type proteinase required for cleavage at the NS3/4 and NS4/5 junctions.</title>
        <authorList>
            <person name="Bartenschlager R."/>
            <person name="Ahlborn-Laake L."/>
            <person name="Mous J."/>
            <person name="Jacobsen H."/>
        </authorList>
    </citation>
    <scope>PROTEOLYTIC PROCESSING (GENOME POLYPROTEIN)</scope>
    <scope>MUTAGENESIS OF HIS-1083; ASP-1107 AND SER-1165</scope>
    <scope>IDENTIFICATION (SERINE PROTEASE/HELICASE NS3)</scope>
    <scope>ACTIVE SITE (SERINE PROTEASE/HELICASE NS3)</scope>
</reference>
<reference key="8">
    <citation type="journal article" date="1994" name="Biochem. Biophys. Res. Commun.">
        <title>Production of two phosphoproteins from the NS5A region of the hepatitis C viral genome.</title>
        <authorList>
            <person name="Kaneko T."/>
            <person name="Tanji Y."/>
            <person name="Satoh S."/>
            <person name="Hijikata M."/>
            <person name="Asabe S."/>
            <person name="Kimura K."/>
            <person name="Shimotohno K."/>
        </authorList>
    </citation>
    <scope>PHOSPHORYLATION (NON-STRUCTURAL PROTEIN 5A)</scope>
</reference>
<reference key="9">
    <citation type="journal article" date="1995" name="J. Virol.">
        <title>Phosphorylation of hepatitis C virus-encoded nonstructural protein NS5A.</title>
        <authorList>
            <person name="Tanji Y."/>
            <person name="Kaneko T."/>
            <person name="Satoh S."/>
            <person name="Shimotohno K."/>
        </authorList>
    </citation>
    <scope>MUTAGENESIS OF SER-2194; SER-2197; SER-2200; SER-2201; SER-2202; SER-2204; SER-2207; SER-2210 AND SER-2221</scope>
    <scope>PHOSPHORYLATION AT SER-2194; SER-2197; SER-2201 AND SER-2204</scope>
    <scope>PHOSPHORYLATION (NON-STRUCTURAL PROTEIN 5A)</scope>
    <scope>SUBCELLULAR LOCATION (NON-STRUCTURAL PROTEIN 5A)</scope>
</reference>
<reference key="10">
    <citation type="journal article" date="1997" name="J. Virol.">
        <title>The N-terminal region of hepatitis C virus-encoded NS5A is important for NS4A-dependent phosphorylation.</title>
        <authorList>
            <person name="Asabe S.I."/>
            <person name="Tanji Y."/>
            <person name="Satoh S."/>
            <person name="Kaneko T."/>
            <person name="Kimura K."/>
            <person name="Shimotohno K."/>
        </authorList>
    </citation>
    <scope>INTERACTION WITH NON-STRUCTURAL PROTEIN 4A (NON-STRUCTURAL PROTEIN 5A)</scope>
    <scope>INTERACTION WITH NON-STRUCTURAL PROTEIN 5A (NON-STRUCTURAL PROTEIN 4A)</scope>
</reference>
<reference key="11">
    <citation type="journal article" date="1997" name="J. Virol.">
        <title>Hepatitis C virus nonstructural region 5A protein is a potent transcriptional activator.</title>
        <authorList>
            <person name="Kato N."/>
            <person name="Lan K.H."/>
            <person name="Ono-Nita S.K."/>
            <person name="Shiratori Y."/>
            <person name="Omata M."/>
        </authorList>
    </citation>
    <scope>FUNCTION (NON-STRUCTURAL PROTEIN 5A)</scope>
</reference>
<reference key="12">
    <citation type="journal article" date="1997" name="J. Virol.">
        <title>The NS3 proteinase domain of hepatitis C virus is a zinc-containing enzyme.</title>
        <authorList>
            <person name="Stempniak M."/>
            <person name="Hostomska Z."/>
            <person name="Nodes B.R."/>
            <person name="Hostomsky Z."/>
        </authorList>
    </citation>
    <scope>ZINC-BINDING (SERINE PROTEASE/HELICASE NS3)</scope>
    <scope>COFACTOR (SERINE PROTEASE/HELICASE NS3)</scope>
    <scope>MUTAGENESIS OF CYS-1042; CYS-1073; CYS-1078; HIS-1083; HIS-1136; SER-1165; HIS-1175; CYS-1185; HIS-1227 AND HIS-1229</scope>
    <scope>ACTIVE SITE (SERINE PROTEASE/HELICASE NS3)</scope>
    <scope>DOMAIN (SERINE PROTEASE/HELICASE NS3)</scope>
    <scope>CATALYTIC ACTIVITY (SERINE PROTEASE/HELICASE NS3)</scope>
</reference>
<reference key="13">
    <citation type="journal article" date="1998" name="J. Virol.">
        <title>The native form and maturation process of hepatitis C virus core protein.</title>
        <authorList>
            <person name="Yasui K."/>
            <person name="Wakita T."/>
            <person name="Tsukiyama-Kohara K."/>
            <person name="Funahashi S."/>
            <person name="Ichikawa M."/>
            <person name="Kajita T."/>
            <person name="Moradpour D."/>
            <person name="Wands J.R."/>
            <person name="Kohara M."/>
        </authorList>
    </citation>
    <scope>SUBCELLULAR LOCATION (MATURE CORE PROTEIN)</scope>
    <scope>PROTEOLYTIC CLEAVAGE (GENOME POLYPROTEIN)</scope>
</reference>
<reference key="14">
    <citation type="journal article" date="1998" name="J. Virol.">
        <title>Interferon resistance of hepatitis C virus genotype 1b: relationship to nonstructural 5A gene quasispecies mutations.</title>
        <authorList>
            <person name="Pawlotsky J.-M."/>
            <person name="Germanidis G."/>
            <person name="Neumann A.U."/>
            <person name="Pellerin M."/>
            <person name="Frainais P.-O."/>
            <person name="Dhumeaux D."/>
        </authorList>
    </citation>
    <scope>DOMAIN (NON-STRUCTURAL PROTEIN 5A)</scope>
</reference>
<reference key="15">
    <citation type="journal article" date="2000" name="Virology">
        <title>Cleavage of hepatitis C virus nonstructural protein 5A by a caspase-like protease(s) in mammalian cells.</title>
        <authorList>
            <person name="Satoh S."/>
            <person name="Hirota M."/>
            <person name="Noguchi T."/>
            <person name="Hijikata M."/>
            <person name="Handa H."/>
            <person name="Shimotohno K."/>
        </authorList>
    </citation>
    <scope>SUBCELLULAR LOCATION (NON-STRUCTURAL PROTEIN 5A)</scope>
    <scope>NUCLEAR LOCALIZATION REGION (NON-STRUCTURAL PROTEIN 5A)</scope>
    <scope>PROTEOLYTIC CLEAVAGE (NON-STRUCTURAL PROTEIN 5A)</scope>
</reference>
<reference key="16">
    <citation type="journal article" date="2000" name="J. Viral Hepat.">
        <title>Properties of the hepatitis C virus core protein: a structural protein that modulates cellular processes.</title>
        <authorList>
            <person name="McLauchlan J."/>
        </authorList>
    </citation>
    <scope>REVIEW</scope>
</reference>
<reference key="17">
    <citation type="journal article" date="2002" name="J. Virol.">
        <title>Oligomerization and cooperative RNA synthesis activity of hepatitis C virus RNA-dependent RNA polymerase.</title>
        <authorList>
            <person name="Wang Q.M."/>
            <person name="Hockman M.A."/>
            <person name="Staschke K."/>
            <person name="Johnson R.B."/>
            <person name="Case K.A."/>
            <person name="Lu J."/>
            <person name="Parsons S."/>
            <person name="Zhang F."/>
            <person name="Rathnachalam R."/>
            <person name="Kirkegaard K."/>
            <person name="Colacino J.M."/>
        </authorList>
    </citation>
    <scope>OLIGOMERIZATION (RNA-DIRECTED RNA POLYMERASE)</scope>
    <scope>CATALYTIC ACTIVITY (RNA-DIRECTED RNA POLYMERASE)</scope>
</reference>
<reference key="18">
    <citation type="journal article" date="2003" name="Mol. Cell. Biol.">
        <title>Modulation of retinoid signaling by a cytoplasmic viral protein via sequestration of Sp110b, a potent transcriptional corepressor of retinoic acid receptor, from the nucleus.</title>
        <authorList>
            <person name="Watashi K."/>
            <person name="Hijikata M."/>
            <person name="Tagawa A."/>
            <person name="Doi T."/>
            <person name="Marusawa H."/>
            <person name="Shimotohno K."/>
        </authorList>
    </citation>
    <scope>INTERACTION WITH HOST SP110 (MATURE CORE PROTEIN)</scope>
    <scope>FUNCTION (MATURE CORE PROTEIN)</scope>
</reference>
<reference key="19">
    <citation type="journal article" date="2004" name="J. Virol.">
        <title>Intramembrane proteolysis and endoplasmic reticulum retention of hepatitis C virus core protein.</title>
        <authorList>
            <person name="Okamoto K."/>
            <person name="Moriishi K."/>
            <person name="Miyamura T."/>
            <person name="Matsuura Y."/>
        </authorList>
    </citation>
    <scope>MUTAGENESIS OF LEU-139; VAL-140; LEU-144; 176-ILE-PHE-177; 178-LEU-LEU-179; 181-LEU-LEU-182 AND 183-SER-CYS-184</scope>
    <scope>PROTEOLYTIC CLEAVAGE (GENOME POLYPROTEIN)</scope>
    <scope>SUBCELLULAR LOCATION (MATURE CORE PROTEIN)</scope>
    <scope>SUBCELLULAR LOCATION (CORE PROTEIN PRECURSOR)</scope>
</reference>
<reference key="20">
    <citation type="journal article" date="2004" name="Hepatology">
        <title>Structural biology of hepatitis C virus.</title>
        <authorList>
            <person name="Penin F."/>
            <person name="Dubuisson J."/>
            <person name="Rey F.A."/>
            <person name="Moradpour D."/>
            <person name="Pawlotsky J.-M."/>
        </authorList>
    </citation>
    <scope>REVIEW</scope>
</reference>
<reference key="21">
    <citation type="journal article" date="2005" name="J. Biol. Chem.">
        <title>Hepatitis C virus core protein acts as a trans-modulating factor on internal translation initiation of the viral RNA.</title>
        <authorList>
            <person name="Boni S."/>
            <person name="Lavergne J.-P."/>
            <person name="Boulant S."/>
            <person name="Cahour A."/>
        </authorList>
    </citation>
    <scope>FUNCTION (MATURE CORE PROTEIN)</scope>
</reference>
<reference key="22">
    <citation type="journal article" date="2005" name="Gastroenterology">
        <title>Hepatitis C virus expression suppresses interferon signaling by degrading STAT1.</title>
        <authorList>
            <person name="Lin W."/>
            <person name="Choe W.H."/>
            <person name="Hiasa Y."/>
            <person name="Kamegaya Y."/>
            <person name="Blackard J.T."/>
            <person name="Schmidt E.V."/>
            <person name="Chung R.T."/>
        </authorList>
    </citation>
    <scope>INTERACTION WITH HOST STAT1 (MATURE CORE PROTEIN)</scope>
    <scope>FUNCTION (MATURE CORE PROTEIN)</scope>
</reference>
<reference key="23">
    <citation type="journal article" date="2005" name="J. Virol.">
        <title>Molecular determinants for subcellular localization of hepatitis C virus core protein.</title>
        <authorList>
            <person name="Suzuki R."/>
            <person name="Sakamoto S."/>
            <person name="Tsutsumi T."/>
            <person name="Rikimaru A."/>
            <person name="Tanaka K."/>
            <person name="Shimoike T."/>
            <person name="Moriishi K."/>
            <person name="Iwasaki T."/>
            <person name="Mizumoto K."/>
            <person name="Matsuura Y."/>
            <person name="Miyamura T."/>
            <person name="Suzuki T."/>
        </authorList>
    </citation>
    <scope>SUBCELLULAR LOCATION (MATURE CORE PROTEIN)</scope>
</reference>
<reference key="24">
    <citation type="journal article" date="2005" name="J. Biol. Chem.">
        <title>Hepatitis C virus nonstructural protein 5A (NS5A) is an RNA-binding protein.</title>
        <authorList>
            <person name="Huang L."/>
            <person name="Hwang J."/>
            <person name="Sharma S.D."/>
            <person name="Hargittai M.R."/>
            <person name="Chen Y."/>
            <person name="Arnold J.J."/>
            <person name="Raney K.D."/>
            <person name="Cameron C.E."/>
        </authorList>
    </citation>
    <scope>FUNCTION (NON-STRUCTURAL PROTEIN 5A)</scope>
    <scope>RNA-BINDING (NON-STRUCTURAL PROTEIN 5A)</scope>
</reference>
<reference key="25">
    <citation type="journal article" date="2005" name="J. Virol.">
        <title>Human VAP-B is involved in hepatitis C virus replication through interaction with NS5A and NS5B.</title>
        <authorList>
            <person name="Hamamoto I."/>
            <person name="Nishimura Y."/>
            <person name="Okamoto T."/>
            <person name="Aizaki H."/>
            <person name="Liu M."/>
            <person name="Mori Y."/>
            <person name="Abe T."/>
            <person name="Suzuki T."/>
            <person name="Lai M.M."/>
            <person name="Miyamura T."/>
            <person name="Moriishi K."/>
            <person name="Matsuura Y."/>
        </authorList>
    </citation>
    <scope>INTERACTION WITH HOST VAPB (NON-STRUCTURAL PROTEIN 5A)</scope>
    <scope>INTERACTION WITH HOST VAPB (RNA-DIRECTED RNA POLYMERASE)</scope>
    <scope>SUBCELLULAR LOCATION (NON-STRUCTURAL PROTEIN 5A)</scope>
</reference>
<reference key="26">
    <citation type="journal article" date="2006" name="J. Biol. Chem.">
        <title>The NS5A protein of the hepatitis C virus genotype 1a is cleaved by caspases to produce C-terminal-truncated forms of the protein that reside mainly in the cytosol.</title>
        <authorList>
            <person name="Kalamvoki M."/>
            <person name="Georgopoulou U."/>
            <person name="Mavromara P."/>
        </authorList>
    </citation>
    <scope>PROTEOLYTIC CLEAVAGE (NON-STRUCTURAL PROTEIN 5A)</scope>
</reference>
<reference key="27">
    <citation type="journal article" date="2006" name="J. Virol.">
        <title>Hepatitis C virus core protein blocks interferon signaling by interaction with the STAT1 SH2 domain.</title>
        <authorList>
            <person name="Lin W."/>
            <person name="Kim S.S."/>
            <person name="Yeung E."/>
            <person name="Kamegaya Y."/>
            <person name="Blackard J.T."/>
            <person name="Kim K.A."/>
            <person name="Holtzman M.J."/>
            <person name="Chung R.T."/>
        </authorList>
    </citation>
    <scope>INTERACTION WITH HOST STAT1 (MATURE CORE PROTEIN)</scope>
    <scope>FUNCTION (MATURE CORE PROTEIN)</scope>
</reference>
<reference key="28">
    <citation type="journal article" date="2006" name="FEBS Lett.">
        <title>Hepatitis C virus non-structural protein NS5A interacts with FKBP38 and inhibits apoptosis in Huh7 hepatoma cells.</title>
        <authorList>
            <person name="Wang J."/>
            <person name="Tong W."/>
            <person name="Zhang X."/>
            <person name="Chen L."/>
            <person name="Yi Z."/>
            <person name="Pan T."/>
            <person name="Hu Y."/>
            <person name="Xiang L."/>
            <person name="Yuan Z."/>
        </authorList>
    </citation>
    <scope>INTERACTION WITH HOST FKBP8 (NON-STRUCTURAL PROTEIN 5A)</scope>
    <scope>SUBCELLULAR LOCATION (NON-STRUCTURAL PROTEIN 5A)</scope>
</reference>
<reference key="29">
    <citation type="journal article" date="2007" name="Virus Res.">
        <title>Mapping of the interacting domains of hepatitis C virus core protein and the double-stranded RNA-activated protein kinase PKR.</title>
        <authorList>
            <person name="Yan X.B."/>
            <person name="Battaglia S."/>
            <person name="Boucreux D."/>
            <person name="Chen Z."/>
            <person name="Brechot C."/>
            <person name="Pavio N."/>
        </authorList>
    </citation>
    <scope>INTERACTION WITH HOST EIF2AK2 (MATURE CORE PROTEIN)</scope>
</reference>
<reference key="30">
    <citation type="journal article" date="2007" name="World J. Gastroenterol.">
        <title>Quasispecies evolution in NS5A region of hepatitis C virus genotype 1b during interferon or combined interferon-ribavirin therapy.</title>
        <authorList>
            <person name="Veillon P."/>
            <person name="Payan C."/>
            <person name="Le Guillou-Guillemette H."/>
            <person name="Gaudy C."/>
            <person name="Lunel F."/>
        </authorList>
    </citation>
    <scope>INTERACTION WITH HOST EIF2AK2 (NON-STRUCTURAL PROTEIN 5A)</scope>
    <scope>DOMAIN (NON-STRUCTURAL PROTEIN 5A)</scope>
</reference>
<reference key="31">
    <citation type="journal article" date="2010" name="FEBS Lett.">
        <title>HCV NS3 protein helicase domain assists RNA structure conversion.</title>
        <authorList>
            <person name="Huang Z.S."/>
            <person name="Wang C.C."/>
            <person name="Wu H.N."/>
        </authorList>
    </citation>
    <scope>FUNCTION (SERINE PROTEASE/HELICASE NS3)</scope>
    <scope>CATALYTIC ACTIVITY (SERINE PROTEASE/HELICASE NS3)</scope>
    <scope>COFACTOR (SERINE PROTEASE/HELICASE NS3)</scope>
</reference>
<reference key="32">
    <citation type="journal article" date="2013" name="Glycobiology">
        <title>Mass spectrometric analysis of hepatitis C viral envelope protein E2 reveals extended microheterogeneity of mucin-type O-linked glycosylation.</title>
        <authorList>
            <person name="Braeutigam J."/>
            <person name="Scheidig A.J."/>
            <person name="Egge-Jacobsen W."/>
        </authorList>
    </citation>
    <scope>GLYCOSYLATION AT THR-385; THR-396; SER-401; SER-404; THR-473 AND THR-518</scope>
    <scope>IDENTIFICATION BY MASS SPECTROMETRY</scope>
    <source>
        <strain>HCV-S</strain>
    </source>
</reference>
<reference key="33">
    <citation type="journal article" date="2013" name="PLoS Pathog.">
        <title>Rab18 binds to hepatitis C virus NS5A and promotes interaction between sites of viral replication and lipid droplets.</title>
        <authorList>
            <person name="Salloum S."/>
            <person name="Wang H."/>
            <person name="Ferguson C."/>
            <person name="Parton R.G."/>
            <person name="Tai A.W."/>
        </authorList>
    </citation>
    <scope>INTERACTION WITH HOST RAB18 (NON-STRUCTURAL PROTEIN 5A)</scope>
    <scope>SUBCELLULAR LOCATION (NON-STRUCTURAL PROTEIN 5A)</scope>
</reference>
<reference key="34">
    <citation type="journal article" date="2013" name="J. Virol.">
        <title>Regulation of hepatitis C virus replication by nuclear translocation of nonstructural 5A protein and transcriptional activation of host genes.</title>
        <authorList>
            <person name="Maqbool M.A."/>
            <person name="Imache M.R."/>
            <person name="Higgs M.R."/>
            <person name="Carmouse S."/>
            <person name="Pawlotsky J.M."/>
            <person name="Lerat H."/>
        </authorList>
    </citation>
    <scope>FUNCTION (NON-STRUCTURAL PROTEIN 5A)</scope>
    <scope>SUBCELLULAR LOCATION (NON-STRUCTURAL PROTEIN 5A)</scope>
    <scope>DOMAIN (NON-STRUCTURAL PROTEIN 5A)</scope>
    <scope>NUCLEAR LOCALIZATION REGION (NON-STRUCTURAL PROTEIN 5A)</scope>
    <scope>MUTAGENESIS OF ASP-2126</scope>
</reference>
<reference key="35">
    <citation type="journal article" date="2014" name="J. Virol.">
        <title>Phosphorylation of hepatitis C virus RNA polymerases ser29 and ser42 by protein kinase C-related kinase 2 regulates viral RNA replication.</title>
        <authorList>
            <person name="Han S.H."/>
            <person name="Kim S.J."/>
            <person name="Kim E.J."/>
            <person name="Kim T.E."/>
            <person name="Moon J.S."/>
            <person name="Kim G.W."/>
            <person name="Lee S.H."/>
            <person name="Cho K."/>
            <person name="Yoo J.S."/>
            <person name="Son W.S."/>
            <person name="Rhee J.K."/>
            <person name="Han S.H."/>
            <person name="Oh J.W."/>
        </authorList>
    </citation>
    <scope>PHOSPHORYLATION AT SER-2448 AND SER-2461</scope>
    <scope>PHOSPHORYLATION (RNA-DIRECTED RNA POLYMERASE)</scope>
    <scope>MUTAGENESIS OF SER-2448 AND SER-2461</scope>
</reference>
<reference key="36">
    <citation type="journal article" date="2019" name="Biochem. Biophys. Res. Commun.">
        <title>HCV NS5A hyperphosphorylation is involved in viral translation modulation.</title>
        <authorList>
            <person name="Kandangwa M."/>
            <person name="Liu Q."/>
        </authorList>
    </citation>
    <scope>FUNCTION (NON-STRUCTURAL PROTEIN 5A)</scope>
    <scope>MUTAGENESIS OF SER-2194; SER-2197; SER-2201; SER-2204; SER-2207 AND SER-2210</scope>
    <scope>SUBUNIT (NON-STRUCTURAL PROTEIN 5A)</scope>
</reference>
<reference key="37">
    <citation type="journal article" date="2000" name="J. Biol. Chem.">
        <title>Inhibition of the hepatitis C virus NS3/4A protease. The crystal structures of two protease-inhibitor complexes.</title>
        <authorList>
            <person name="Di Marco S."/>
            <person name="Rizzi M."/>
            <person name="Volpari C."/>
            <person name="Walsh M.A."/>
            <person name="Narjes F."/>
            <person name="Colarusso S."/>
            <person name="De Francesco R."/>
            <person name="Matassa V.G."/>
            <person name="Sollazzo M."/>
        </authorList>
    </citation>
    <scope>X-RAY CRYSTALLOGRAPHY (2.1 ANGSTROMS) OF 1027-1213</scope>
</reference>
<reference key="38">
    <citation type="journal article" date="2004" name="J. Med. Chem.">
        <title>The design and enzyme-bound crystal structure of indoline based peptidomimetic inhibitors of hepatitis C virus NS3 protease.</title>
        <authorList>
            <person name="Ontoria J.M."/>
            <person name="Di Marco S."/>
            <person name="Conte I."/>
            <person name="Di Francesco M.E."/>
            <person name="Gardelli C."/>
            <person name="Koch U."/>
            <person name="Matassa V.G."/>
            <person name="Poma M."/>
            <person name="Steinkuehler C."/>
            <person name="Volpari C."/>
            <person name="Harper S."/>
        </authorList>
    </citation>
    <scope>X-RAY CRYSTALLOGRAPHY (2.3 ANGSTROMS) OF 1027-1213 IN COMPLEX WITH A PEPTIDOMIMETIC INHIBITOR</scope>
</reference>
<reference evidence="62" key="39">
    <citation type="journal article" date="2010" name="J. Biol. Chem.">
        <title>NMR structure and ion channel activity of the p7 protein from hepatitis C virus.</title>
        <authorList>
            <person name="Montserret R."/>
            <person name="Saint N."/>
            <person name="Vanbelle C."/>
            <person name="Salvay A.G."/>
            <person name="Simorre J.P."/>
            <person name="Ebel C."/>
            <person name="Sapay N."/>
            <person name="Renisio J.G."/>
            <person name="Bockmann A."/>
            <person name="Steinmann E."/>
            <person name="Pietschmann T."/>
            <person name="Dubuisson J."/>
            <person name="Chipot C."/>
            <person name="Penin F."/>
        </authorList>
    </citation>
    <scope>STRUCTURE BY NMR OF 781-809</scope>
    <scope>FUNCTION (VIROPORIN P7)</scope>
</reference>
<reference evidence="64 65" key="40">
    <citation type="journal article" date="2011" name="J. Biol. Chem.">
        <title>Combined X-ray, NMR, and kinetic analyses reveal uncommon binding characteristics of the hepatitis C virus NS3-NS4A protease inhibitor BI 201335.</title>
        <authorList>
            <person name="Lemke C.T."/>
            <person name="Goudreau N."/>
            <person name="Zhao S."/>
            <person name="Hucke O."/>
            <person name="Thibeault D."/>
            <person name="Llinas-Brunet M."/>
            <person name="White P.W."/>
        </authorList>
    </citation>
    <scope>X-RAY CRYSTALLOGRAPHY (1.90 ANGSTROMS) OF 1027-1206 AND 1678-1691</scope>
</reference>
<reference evidence="63" key="41">
    <citation type="journal article" date="2011" name="Nat. Chem. Biol.">
        <title>Selective irreversible inhibition of a protease by targeting a noncatalytic cysteine.</title>
        <authorList>
            <person name="Hagel M."/>
            <person name="Niu D."/>
            <person name="St Martin T."/>
            <person name="Sheets M.P."/>
            <person name="Qiao L."/>
            <person name="Bernard H."/>
            <person name="Karp R.M."/>
            <person name="Zhu Z."/>
            <person name="Labenski M.T."/>
            <person name="Chaturvedi P."/>
            <person name="Nacht M."/>
            <person name="Westlin W.F."/>
            <person name="Petter R.C."/>
            <person name="Singh J."/>
        </authorList>
    </citation>
    <scope>X-RAY CRYSTALLOGRAPHY (2.76 ANGSTROMS) OF 1027-1213 AND 1678-1691 IN COMPLEX WITH ZINC</scope>
</reference>
<reference evidence="66 67 68" key="42">
    <citation type="journal article" date="2012" name="J. Biol. Chem.">
        <title>High affinity peptide inhibitors of the hepatitis C virus NS3-4A protease refractory to common resistant mutants.</title>
        <authorList>
            <person name="Kugler J."/>
            <person name="Schmelz S."/>
            <person name="Gentzsch J."/>
            <person name="Haid S."/>
            <person name="Pollmann E."/>
            <person name="van den Heuvel J."/>
            <person name="Franke R."/>
            <person name="Pietschmann T."/>
            <person name="Heinz D.W."/>
            <person name="Collins J."/>
        </authorList>
    </citation>
    <scope>X-RAY CRYSTALLOGRAPHY (1.90 ANGSTROMS) OF 1028-1206 AND 1678-1690 IN COMPLEX WITH ZINC</scope>
</reference>
<reference evidence="69 70 71" key="43">
    <citation type="journal article" date="2013" name="J. Biol. Chem.">
        <title>Molecular mechanism by which a potent hepatitis C virus NS3-NS4A protease inhibitor overcomes emergence of resistance.</title>
        <authorList>
            <person name="O'Meara J.A."/>
            <person name="Lemke C.T."/>
            <person name="Godbout C."/>
            <person name="Kukolj G."/>
            <person name="Lagace L."/>
            <person name="Moreau B."/>
            <person name="Thibeault D."/>
            <person name="White P.W."/>
            <person name="Llinas-Brunet M."/>
        </authorList>
    </citation>
    <scope>X-RAY CRYSTALLOGRAPHY (1.90 ANGSTROMS) OF 1027-1206; 1208-1208 AND 1678-1691</scope>
</reference>
<reference evidence="72" key="44">
    <citation type="submission" date="2013-03" db="PDB data bank">
        <title>Importance of the peptide scaffold of drugs that target the hepatitis C virus NS3 protease and its crucial bioactive conformation and dynamic factors.</title>
        <authorList>
            <person name="LaPlante S."/>
            <person name="Lemke C.T."/>
        </authorList>
    </citation>
    <scope>X-RAY CRYSTALLOGRAPHY (1.95 ANGSTROMS) OF 1678-1691</scope>
</reference>
<reference evidence="73" key="45">
    <citation type="journal article" date="2014" name="J. Med. Chem.">
        <title>Discovery of danoprevir (ITMN-191/R7227), a highly selective and potent inhibitor of hepatitis C virus (HCV) NS3/4A protease.</title>
        <authorList>
            <person name="Jiang Y."/>
            <person name="Andrews S.W."/>
            <person name="Condroski K.R."/>
            <person name="Buckman B."/>
            <person name="Serebryany V."/>
            <person name="Wenglowsky S."/>
            <person name="Kennedy A.L."/>
            <person name="Madduru M.R."/>
            <person name="Wang B."/>
            <person name="Lyon M."/>
            <person name="Doherty G.A."/>
            <person name="Woodard B.T."/>
            <person name="Lemieux C."/>
            <person name="Geck Do M."/>
            <person name="Zhang H."/>
            <person name="Ballard J."/>
            <person name="Vigers G."/>
            <person name="Brandhuber B.J."/>
            <person name="Stengel P."/>
            <person name="Josey J.A."/>
            <person name="Beigelman L."/>
            <person name="Blatt L."/>
            <person name="Seiwert S.D."/>
        </authorList>
    </citation>
    <scope>X-RAY CRYSTALLOGRAPHY (2.30 ANGSTROMS) OF 1028-1213 IN COMPLEX WITH ZINC</scope>
</reference>
<proteinExistence type="evidence at protein level"/>
<protein>
    <recommendedName>
        <fullName>Genome polyprotein</fullName>
    </recommendedName>
    <component>
        <recommendedName>
            <fullName>Core protein precursor</fullName>
        </recommendedName>
        <alternativeName>
            <fullName>Capsid protein C</fullName>
        </alternativeName>
        <alternativeName>
            <fullName>p23</fullName>
        </alternativeName>
    </component>
    <component>
        <recommendedName>
            <fullName>Mature core protein</fullName>
        </recommendedName>
        <alternativeName>
            <fullName>p21</fullName>
        </alternativeName>
    </component>
    <component>
        <recommendedName>
            <fullName>Envelope glycoprotein E1</fullName>
        </recommendedName>
        <alternativeName>
            <fullName>gp32</fullName>
        </alternativeName>
        <alternativeName>
            <fullName>gp35</fullName>
        </alternativeName>
    </component>
    <component>
        <recommendedName>
            <fullName>Envelope glycoprotein E2</fullName>
        </recommendedName>
        <alternativeName>
            <fullName>NS1</fullName>
        </alternativeName>
        <alternativeName>
            <fullName>gp68</fullName>
        </alternativeName>
        <alternativeName>
            <fullName>gp70</fullName>
        </alternativeName>
    </component>
    <component>
        <recommendedName>
            <fullName>Viroporin p7</fullName>
        </recommendedName>
    </component>
    <component>
        <recommendedName>
            <fullName>Protease NS2</fullName>
            <shortName>p23</shortName>
            <ecNumber evidence="3">3.4.22.-</ecNumber>
        </recommendedName>
        <alternativeName>
            <fullName>Non-structural protein 2</fullName>
            <shortName>NS2</shortName>
        </alternativeName>
    </component>
    <component>
        <recommendedName>
            <fullName>Serine protease/helicase NS3</fullName>
            <ecNumber evidence="47">3.4.21.98</ecNumber>
            <ecNumber evidence="34">3.6.1.15</ecNumber>
            <ecNumber evidence="34">3.6.4.13</ecNumber>
        </recommendedName>
        <alternativeName>
            <fullName>Hepacivirin</fullName>
        </alternativeName>
        <alternativeName>
            <fullName evidence="5">NS3 helicase</fullName>
        </alternativeName>
        <alternativeName>
            <fullName evidence="5">NS3 protease</fullName>
        </alternativeName>
        <alternativeName>
            <fullName>NS3P</fullName>
        </alternativeName>
        <alternativeName>
            <fullName>Viroporin p70</fullName>
        </alternativeName>
    </component>
    <component>
        <recommendedName>
            <fullName>Non-structural protein 4A</fullName>
            <shortName>NS4A</shortName>
        </recommendedName>
        <alternativeName>
            <fullName>p8</fullName>
        </alternativeName>
    </component>
    <component>
        <recommendedName>
            <fullName>Non-structural protein 4B</fullName>
            <shortName>NS4B</shortName>
        </recommendedName>
        <alternativeName>
            <fullName>p27</fullName>
        </alternativeName>
    </component>
    <component>
        <recommendedName>
            <fullName>Non-structural protein 5A</fullName>
            <shortName>NS5A</shortName>
        </recommendedName>
        <alternativeName>
            <fullName>p56/58</fullName>
        </alternativeName>
    </component>
    <component>
        <recommendedName>
            <fullName>RNA-directed RNA polymerase</fullName>
            <ecNumber evidence="20">2.7.7.48</ecNumber>
        </recommendedName>
        <alternativeName>
            <fullName>NS5B</fullName>
        </alternativeName>
        <alternativeName>
            <fullName>p68</fullName>
        </alternativeName>
    </component>
</protein>